<reference evidence="40 44" key="1">
    <citation type="journal article" date="2004" name="Curr. Biol.">
        <title>Rictor, a novel binding partner of mTOR, defines a rapamycin-insensitive and raptor-independent pathway that regulates the cytoskeleton.</title>
        <authorList>
            <person name="Sarbassov D.D."/>
            <person name="Ali S.M."/>
            <person name="Kim D.-H."/>
            <person name="Guertin D.A."/>
            <person name="Latek R.R."/>
            <person name="Erdjument-Bromage H."/>
            <person name="Tempst P."/>
            <person name="Sabatini D.M."/>
        </authorList>
    </citation>
    <scope>NUCLEOTIDE SEQUENCE [MRNA] (ISOFORM 1)</scope>
    <scope>FUNCTION</scope>
    <scope>IDENTIFICATION IN THE TORC2 COMPLEX</scope>
    <scope>INTERACTION WITH MTOR</scope>
</reference>
<reference key="2">
    <citation type="journal article" date="2007" name="BMC Genomics">
        <title>The full-ORF clone resource of the German cDNA consortium.</title>
        <authorList>
            <person name="Bechtel S."/>
            <person name="Rosenfelder H."/>
            <person name="Duda A."/>
            <person name="Schmidt C.P."/>
            <person name="Ernst U."/>
            <person name="Wellenreuther R."/>
            <person name="Mehrle A."/>
            <person name="Schuster C."/>
            <person name="Bahr A."/>
            <person name="Bloecker H."/>
            <person name="Heubner D."/>
            <person name="Hoerlein A."/>
            <person name="Michel G."/>
            <person name="Wedler H."/>
            <person name="Koehrer K."/>
            <person name="Ottenwaelder B."/>
            <person name="Poustka A."/>
            <person name="Wiemann S."/>
            <person name="Schupp I."/>
        </authorList>
    </citation>
    <scope>NUCLEOTIDE SEQUENCE [LARGE SCALE MRNA] (ISOFORM 2)</scope>
    <scope>NUCLEOTIDE SEQUENCE [LARGE SCALE MRNA] OF 932-1708 (ISOFORM 3)</scope>
    <scope>VARIANT PHE-837</scope>
    <source>
        <tissue>Amygdala</tissue>
    </source>
</reference>
<reference key="3">
    <citation type="journal article" date="2004" name="Nature">
        <title>The DNA sequence and comparative analysis of human chromosome 5.</title>
        <authorList>
            <person name="Schmutz J."/>
            <person name="Martin J."/>
            <person name="Terry A."/>
            <person name="Couronne O."/>
            <person name="Grimwood J."/>
            <person name="Lowry S."/>
            <person name="Gordon L.A."/>
            <person name="Scott D."/>
            <person name="Xie G."/>
            <person name="Huang W."/>
            <person name="Hellsten U."/>
            <person name="Tran-Gyamfi M."/>
            <person name="She X."/>
            <person name="Prabhakar S."/>
            <person name="Aerts A."/>
            <person name="Altherr M."/>
            <person name="Bajorek E."/>
            <person name="Black S."/>
            <person name="Branscomb E."/>
            <person name="Caoile C."/>
            <person name="Challacombe J.F."/>
            <person name="Chan Y.M."/>
            <person name="Denys M."/>
            <person name="Detter J.C."/>
            <person name="Escobar J."/>
            <person name="Flowers D."/>
            <person name="Fotopulos D."/>
            <person name="Glavina T."/>
            <person name="Gomez M."/>
            <person name="Gonzales E."/>
            <person name="Goodstein D."/>
            <person name="Grigoriev I."/>
            <person name="Groza M."/>
            <person name="Hammon N."/>
            <person name="Hawkins T."/>
            <person name="Haydu L."/>
            <person name="Israni S."/>
            <person name="Jett J."/>
            <person name="Kadner K."/>
            <person name="Kimball H."/>
            <person name="Kobayashi A."/>
            <person name="Lopez F."/>
            <person name="Lou Y."/>
            <person name="Martinez D."/>
            <person name="Medina C."/>
            <person name="Morgan J."/>
            <person name="Nandkeshwar R."/>
            <person name="Noonan J.P."/>
            <person name="Pitluck S."/>
            <person name="Pollard M."/>
            <person name="Predki P."/>
            <person name="Priest J."/>
            <person name="Ramirez L."/>
            <person name="Retterer J."/>
            <person name="Rodriguez A."/>
            <person name="Rogers S."/>
            <person name="Salamov A."/>
            <person name="Salazar A."/>
            <person name="Thayer N."/>
            <person name="Tice H."/>
            <person name="Tsai M."/>
            <person name="Ustaszewska A."/>
            <person name="Vo N."/>
            <person name="Wheeler J."/>
            <person name="Wu K."/>
            <person name="Yang J."/>
            <person name="Dickson M."/>
            <person name="Cheng J.-F."/>
            <person name="Eichler E.E."/>
            <person name="Olsen A."/>
            <person name="Pennacchio L.A."/>
            <person name="Rokhsar D.S."/>
            <person name="Richardson P."/>
            <person name="Lucas S.M."/>
            <person name="Myers R.M."/>
            <person name="Rubin E.M."/>
        </authorList>
    </citation>
    <scope>NUCLEOTIDE SEQUENCE [LARGE SCALE GENOMIC DNA]</scope>
</reference>
<reference evidence="40 46" key="4">
    <citation type="submission" date="2005-07" db="EMBL/GenBank/DDBJ databases">
        <authorList>
            <person name="Mural R.J."/>
            <person name="Istrail S."/>
            <person name="Sutton G.G."/>
            <person name="Florea L."/>
            <person name="Halpern A.L."/>
            <person name="Mobarry C.M."/>
            <person name="Lippert R."/>
            <person name="Walenz B."/>
            <person name="Shatkay H."/>
            <person name="Dew I."/>
            <person name="Miller J.R."/>
            <person name="Flanigan M.J."/>
            <person name="Edwards N.J."/>
            <person name="Bolanos R."/>
            <person name="Fasulo D."/>
            <person name="Halldorsson B.V."/>
            <person name="Hannenhalli S."/>
            <person name="Turner R."/>
            <person name="Yooseph S."/>
            <person name="Lu F."/>
            <person name="Nusskern D.R."/>
            <person name="Shue B.C."/>
            <person name="Zheng X.H."/>
            <person name="Zhong F."/>
            <person name="Delcher A.L."/>
            <person name="Huson D.H."/>
            <person name="Kravitz S.A."/>
            <person name="Mouchard L."/>
            <person name="Reinert K."/>
            <person name="Remington K.A."/>
            <person name="Clark A.G."/>
            <person name="Waterman M.S."/>
            <person name="Eichler E.E."/>
            <person name="Adams M.D."/>
            <person name="Hunkapiller M.W."/>
            <person name="Myers E.W."/>
            <person name="Venter J.C."/>
        </authorList>
    </citation>
    <scope>NUCLEOTIDE SEQUENCE [LARGE SCALE GENOMIC DNA]</scope>
</reference>
<reference evidence="40 43" key="5">
    <citation type="journal article" date="2004" name="Genome Res.">
        <title>The status, quality, and expansion of the NIH full-length cDNA project: the Mammalian Gene Collection (MGC).</title>
        <authorList>
            <consortium name="The MGC Project Team"/>
        </authorList>
    </citation>
    <scope>NUCLEOTIDE SEQUENCE [LARGE SCALE MRNA] (ISOFORMS 1 AND 3)</scope>
    <scope>VARIANT PHE-837</scope>
    <source>
        <tissue>Brain</tissue>
        <tissue evidence="43">Lymph</tissue>
    </source>
</reference>
<reference evidence="40 45" key="6">
    <citation type="journal article" date="2002" name="DNA Res.">
        <title>Characterization of size-fractionated cDNA libraries generated by the in vitro recombination-assisted method.</title>
        <authorList>
            <person name="Ohara O."/>
            <person name="Nagase T."/>
            <person name="Mitsui G."/>
            <person name="Kohga H."/>
            <person name="Kikuno R."/>
            <person name="Hiraoka S."/>
            <person name="Takahashi Y."/>
            <person name="Kitajima S."/>
            <person name="Saga Y."/>
            <person name="Koseki H."/>
        </authorList>
    </citation>
    <scope>NUCLEOTIDE SEQUENCE [LARGE SCALE MRNA] OF 434-1708 (ISOFORM 1)</scope>
    <source>
        <tissue evidence="45">Brain</tissue>
    </source>
</reference>
<reference key="7">
    <citation type="journal article" date="2004" name="Nat. Cell Biol.">
        <title>Mammalian TOR complex 2 controls the actin cytoskeleton and is rapamycin insensitive.</title>
        <authorList>
            <person name="Jacinto E."/>
            <person name="Loewith R."/>
            <person name="Schmidt A."/>
            <person name="Lin S."/>
            <person name="Ruegg M.A."/>
            <person name="Hall A."/>
            <person name="Hall M.N."/>
        </authorList>
    </citation>
    <scope>FUNCTION</scope>
    <scope>IDENTIFICATION IN THE TORC2 COMPLEX</scope>
    <scope>PHOSPHORYLATION</scope>
</reference>
<reference evidence="40" key="8">
    <citation type="journal article" date="2005" name="Science">
        <title>Phosphorylation and regulation of Akt/PKB by the rictor-mTOR complex.</title>
        <authorList>
            <person name="Sarbassov D.D."/>
            <person name="Guertin D.A."/>
            <person name="Ali S.M."/>
            <person name="Sabatini D.M."/>
        </authorList>
    </citation>
    <scope>FUNCTION</scope>
</reference>
<reference key="9">
    <citation type="journal article" date="2006" name="Cell">
        <title>Global, in vivo, and site-specific phosphorylation dynamics in signaling networks.</title>
        <authorList>
            <person name="Olsen J.V."/>
            <person name="Blagoev B."/>
            <person name="Gnad F."/>
            <person name="Macek B."/>
            <person name="Kumar C."/>
            <person name="Mortensen P."/>
            <person name="Mann M."/>
        </authorList>
    </citation>
    <scope>PHOSPHORYLATION [LARGE SCALE ANALYSIS] AT SER-21</scope>
    <scope>IDENTIFICATION BY MASS SPECTROMETRY [LARGE SCALE ANALYSIS]</scope>
    <source>
        <tissue>Cervix carcinoma</tissue>
    </source>
</reference>
<reference evidence="40" key="10">
    <citation type="journal article" date="2007" name="Biochem. J.">
        <title>Identification of Protor as a novel Rictor-binding component of mTOR complex-2.</title>
        <authorList>
            <person name="Pearce L.R."/>
            <person name="Huang X."/>
            <person name="Boudeau J."/>
            <person name="Pawlowski R."/>
            <person name="Wullschleger S."/>
            <person name="Deak M."/>
            <person name="Ibrahim A.F.M."/>
            <person name="Gourlay R."/>
            <person name="Magnuson M.A."/>
            <person name="Alessi D.R."/>
        </authorList>
    </citation>
    <scope>IDENTIFICATION IN THE TORC2 COMPLEX</scope>
    <scope>INTERACTION WITH PRR5 AND PRR5L</scope>
</reference>
<reference evidence="40" key="11">
    <citation type="journal article" date="2007" name="J. Biol. Chem.">
        <title>PRR5, a novel component of mTOR complex 2, regulates platelet-derived growth factor receptor beta expression and signaling.</title>
        <authorList>
            <person name="Woo S.-Y."/>
            <person name="Kim D.-H."/>
            <person name="Jun C.-B."/>
            <person name="Kim Y.-M."/>
            <person name="Haar E.V."/>
            <person name="Lee S.-I."/>
            <person name="Hegg J.W."/>
            <person name="Bandhakavi S."/>
            <person name="Griffin T.J."/>
            <person name="Kim D.-H."/>
        </authorList>
    </citation>
    <scope>IDENTIFICATION IN THE TORC2 COMPLEX</scope>
    <scope>INTERACTION WITH PRR5</scope>
</reference>
<reference key="12">
    <citation type="journal article" date="2008" name="J. Proteome Res.">
        <title>Combining protein-based IMAC, peptide-based IMAC, and MudPIT for efficient phosphoproteomic analysis.</title>
        <authorList>
            <person name="Cantin G.T."/>
            <person name="Yi W."/>
            <person name="Lu B."/>
            <person name="Park S.K."/>
            <person name="Xu T."/>
            <person name="Lee J.-D."/>
            <person name="Yates J.R. III"/>
        </authorList>
    </citation>
    <scope>PHOSPHORYLATION [LARGE SCALE ANALYSIS] AT SER-21</scope>
    <scope>IDENTIFICATION BY MASS SPECTROMETRY [LARGE SCALE ANALYSIS]</scope>
    <source>
        <tissue>Cervix carcinoma</tissue>
    </source>
</reference>
<reference key="13">
    <citation type="journal article" date="2008" name="Mol. Cell">
        <title>Kinase-selective enrichment enables quantitative phosphoproteomics of the kinome across the cell cycle.</title>
        <authorList>
            <person name="Daub H."/>
            <person name="Olsen J.V."/>
            <person name="Bairlein M."/>
            <person name="Gnad F."/>
            <person name="Oppermann F.S."/>
            <person name="Korner R."/>
            <person name="Greff Z."/>
            <person name="Keri G."/>
            <person name="Stemmann O."/>
            <person name="Mann M."/>
        </authorList>
    </citation>
    <scope>PHOSPHORYLATION [LARGE SCALE ANALYSIS] AT SER-21 AND SER-1396</scope>
    <scope>IDENTIFICATION BY MASS SPECTROMETRY [LARGE SCALE ANALYSIS]</scope>
    <source>
        <tissue>Cervix carcinoma</tissue>
    </source>
</reference>
<reference key="14">
    <citation type="journal article" date="2008" name="Proc. Natl. Acad. Sci. U.S.A.">
        <title>A quantitative atlas of mitotic phosphorylation.</title>
        <authorList>
            <person name="Dephoure N."/>
            <person name="Zhou C."/>
            <person name="Villen J."/>
            <person name="Beausoleil S.A."/>
            <person name="Bakalarski C.E."/>
            <person name="Elledge S.J."/>
            <person name="Gygi S.P."/>
        </authorList>
    </citation>
    <scope>PHOSPHORYLATION [LARGE SCALE ANALYSIS] AT SER-21; SER-1282; SER-1388 AND SER-1396</scope>
    <scope>IDENTIFICATION BY MASS SPECTROMETRY [LARGE SCALE ANALYSIS]</scope>
    <source>
        <tissue>Cervix carcinoma</tissue>
    </source>
</reference>
<reference key="15">
    <citation type="journal article" date="2009" name="Anal. Chem.">
        <title>Lys-N and trypsin cover complementary parts of the phosphoproteome in a refined SCX-based approach.</title>
        <authorList>
            <person name="Gauci S."/>
            <person name="Helbig A.O."/>
            <person name="Slijper M."/>
            <person name="Krijgsveld J."/>
            <person name="Heck A.J."/>
            <person name="Mohammed S."/>
        </authorList>
    </citation>
    <scope>IDENTIFICATION BY MASS SPECTROMETRY [LARGE SCALE ANALYSIS]</scope>
</reference>
<reference key="16">
    <citation type="journal article" date="2009" name="Mol. Cell. Biol.">
        <title>Characterization of Rictor phosphorylation sites reveals direct regulation of mTOR complex 2 by S6K1.</title>
        <authorList>
            <person name="Dibble C.C."/>
            <person name="Asara J.M."/>
            <person name="Manning B.D."/>
        </authorList>
    </citation>
    <scope>FUNCTION</scope>
    <scope>PHOSPHORYLATION AT SER-21; SER-35; SER-265; THR-1103; THR-1135; SER-1138; SER-1219; SER-1235; THR-1271; SER-1274; SER-1302; SER-1313; SER-1346; SER-1353; THR-1376; TYR-1386; SER-1388; SER-1396; SER-1571; SER-1574 AND SER-1577</scope>
    <scope>MUTAGENESIS OF THR-1135</scope>
</reference>
<reference key="17">
    <citation type="journal article" date="2009" name="Sci. Signal.">
        <title>Quantitative phosphoproteomic analysis of T cell receptor signaling reveals system-wide modulation of protein-protein interactions.</title>
        <authorList>
            <person name="Mayya V."/>
            <person name="Lundgren D.H."/>
            <person name="Hwang S.-I."/>
            <person name="Rezaul K."/>
            <person name="Wu L."/>
            <person name="Eng J.K."/>
            <person name="Rodionov V."/>
            <person name="Han D.K."/>
        </authorList>
    </citation>
    <scope>PHOSPHORYLATION [LARGE SCALE ANALYSIS] AT SER-21; SER-1284; SER-1388 AND SER-1411</scope>
    <scope>IDENTIFICATION BY MASS SPECTROMETRY [LARGE SCALE ANALYSIS]</scope>
    <source>
        <tissue>Leukemic T-cell</tissue>
    </source>
</reference>
<reference key="18">
    <citation type="journal article" date="2010" name="Mol. Cell. Biol.">
        <title>mTORC1-activated S6K1 phosphorylates Rictor on threonine 1135 and regulates mTORC2 signaling.</title>
        <authorList>
            <person name="Julien L.A."/>
            <person name="Carriere A."/>
            <person name="Moreau J."/>
            <person name="Roux P.P."/>
        </authorList>
    </citation>
    <scope>FUNCTION</scope>
    <scope>PHOSPHORYLATION AT THR-1135</scope>
</reference>
<reference key="19">
    <citation type="journal article" date="2010" name="Oncogene">
        <title>Rictor is a novel target of p70 S6 kinase-1.</title>
        <authorList>
            <person name="Treins C."/>
            <person name="Warne P.H."/>
            <person name="Magnuson M.A."/>
            <person name="Pende M."/>
            <person name="Downward J."/>
        </authorList>
    </citation>
    <scope>FUNCTION</scope>
    <scope>PHOSPHORYLATION AT THR-1135</scope>
    <scope>MUTAGENESIS OF THR-1135</scope>
</reference>
<reference key="20">
    <citation type="journal article" date="2010" name="Sci. Signal.">
        <title>Quantitative phosphoproteomics reveals widespread full phosphorylation site occupancy during mitosis.</title>
        <authorList>
            <person name="Olsen J.V."/>
            <person name="Vermeulen M."/>
            <person name="Santamaria A."/>
            <person name="Kumar C."/>
            <person name="Miller M.L."/>
            <person name="Jensen L.J."/>
            <person name="Gnad F."/>
            <person name="Cox J."/>
            <person name="Jensen T.S."/>
            <person name="Nigg E.A."/>
            <person name="Brunak S."/>
            <person name="Mann M."/>
        </authorList>
    </citation>
    <scope>PHOSPHORYLATION [LARGE SCALE ANALYSIS] AT SER-21</scope>
    <scope>IDENTIFICATION BY MASS SPECTROMETRY [LARGE SCALE ANALYSIS]</scope>
    <source>
        <tissue>Cervix carcinoma</tissue>
    </source>
</reference>
<reference key="21">
    <citation type="journal article" date="2011" name="BMC Syst. Biol.">
        <title>Initial characterization of the human central proteome.</title>
        <authorList>
            <person name="Burkard T.R."/>
            <person name="Planyavsky M."/>
            <person name="Kaupe I."/>
            <person name="Breitwieser F.P."/>
            <person name="Buerckstuemmer T."/>
            <person name="Bennett K.L."/>
            <person name="Superti-Furga G."/>
            <person name="Colinge J."/>
        </authorList>
    </citation>
    <scope>IDENTIFICATION BY MASS SPECTROMETRY [LARGE SCALE ANALYSIS]</scope>
</reference>
<reference key="22">
    <citation type="journal article" date="2011" name="Biochem. Biophys. Res. Commun.">
        <title>Endoplasmic reticulum is a main localization site of mTORC2.</title>
        <authorList>
            <person name="Boulbes D.R."/>
            <person name="Shaiken T."/>
            <person name="Sarbassov D.D."/>
        </authorList>
    </citation>
    <scope>SUBCELLULAR LOCATION</scope>
</reference>
<reference key="23">
    <citation type="journal article" date="2011" name="Sci. Signal.">
        <title>ER stress inhibits mTORC2 and Akt signaling through GSK-3beta-mediated phosphorylation of rictor.</title>
        <authorList>
            <person name="Chen C.H."/>
            <person name="Shaikenov T."/>
            <person name="Peterson T.R."/>
            <person name="Aimbetov R."/>
            <person name="Bissenbaev A.K."/>
            <person name="Lee S.W."/>
            <person name="Wu J."/>
            <person name="Lin H.K."/>
            <person name="Sarbassov D.D."/>
        </authorList>
    </citation>
    <scope>FUNCTION</scope>
    <scope>PHOSPHORYLATION AT SER-1235</scope>
    <scope>MUTAGENESIS OF SER-1235</scope>
</reference>
<reference key="24">
    <citation type="journal article" date="2011" name="Sci. Signal.">
        <title>System-wide temporal characterization of the proteome and phosphoproteome of human embryonic stem cell differentiation.</title>
        <authorList>
            <person name="Rigbolt K.T."/>
            <person name="Prokhorova T.A."/>
            <person name="Akimov V."/>
            <person name="Henningsen J."/>
            <person name="Johansen P.T."/>
            <person name="Kratchmarova I."/>
            <person name="Kassem M."/>
            <person name="Mann M."/>
            <person name="Olsen J.V."/>
            <person name="Blagoev B."/>
        </authorList>
    </citation>
    <scope>PHOSPHORYLATION [LARGE SCALE ANALYSIS] AT SER-21 AND SER-1591</scope>
    <scope>IDENTIFICATION BY MASS SPECTROMETRY [LARGE SCALE ANALYSIS]</scope>
</reference>
<reference key="25">
    <citation type="journal article" date="2012" name="Cell. Signal.">
        <title>Protor-2 interacts with tristetraprolin to regulate mRNA stability during stress.</title>
        <authorList>
            <person name="Holmes B."/>
            <person name="Artinian N."/>
            <person name="Anderson L."/>
            <person name="Martin J."/>
            <person name="Masri J."/>
            <person name="Cloninger C."/>
            <person name="Bernath A."/>
            <person name="Bashir T."/>
            <person name="Benavides-Serrato A."/>
            <person name="Gera J."/>
        </authorList>
    </citation>
    <scope>INTERACTION WITH PRR5L</scope>
</reference>
<reference key="26">
    <citation type="journal article" date="2012" name="J. Biol. Chem.">
        <title>Multiple site acetylation of Rictor stimulates mammalian target of rapamycin complex 2 (mTORC2)-dependent phosphorylation of Akt protein.</title>
        <authorList>
            <person name="Glidden E.J."/>
            <person name="Gray L.G."/>
            <person name="Vemuru S."/>
            <person name="Li D."/>
            <person name="Harris T.E."/>
            <person name="Mayo M.W."/>
        </authorList>
    </citation>
    <scope>ACETYLATION AT LYS-1092; LYS-1095; LYS-1116; LYS-1119 AND LYS-1125</scope>
    <scope>MUTAGENESIS OF 1080-LYS--LYS-1082; 1092-LYS--LYS-1095; 1107-LYS-LYS-1108 AND 1116-LYS--LYS-1125</scope>
</reference>
<reference key="27">
    <citation type="journal article" date="2013" name="Hum. Mol. Genet.">
        <title>The Bardet-Biedl syndrome-related protein CCDC28B modulates mTORC2 function and interacts with SIN1 to control cilia length independently of the mTOR complex.</title>
        <authorList>
            <person name="Cardenas-Rodriguez M."/>
            <person name="Irigoin F."/>
            <person name="Osborn D.P."/>
            <person name="Gascue C."/>
            <person name="Katsanis N."/>
            <person name="Beales P.L."/>
            <person name="Badano J.L."/>
        </authorList>
    </citation>
    <scope>INTERACTION WITH CCDC28B</scope>
</reference>
<reference key="28">
    <citation type="journal article" date="2013" name="J. Proteome Res.">
        <title>Toward a comprehensive characterization of a human cancer cell phosphoproteome.</title>
        <authorList>
            <person name="Zhou H."/>
            <person name="Di Palma S."/>
            <person name="Preisinger C."/>
            <person name="Peng M."/>
            <person name="Polat A.N."/>
            <person name="Heck A.J."/>
            <person name="Mohammed S."/>
        </authorList>
    </citation>
    <scope>PHOSPHORYLATION [LARGE SCALE ANALYSIS] AT SER-21; THR-1103; THR-1135; SER-1162; SER-1278; SER-1282; THR-1295; SER-1302; SER-1313; THR-1332; SER-1346; SER-1353 AND SER-1385</scope>
    <scope>IDENTIFICATION BY MASS SPECTROMETRY [LARGE SCALE ANALYSIS]</scope>
    <source>
        <tissue>Cervix carcinoma</tissue>
        <tissue>Erythroleukemia</tissue>
    </source>
</reference>
<reference key="29">
    <citation type="journal article" date="2013" name="PLoS ONE">
        <title>Interaction between NBS1 and the mTOR/Rictor/SIN1 complex through specific domains.</title>
        <authorList>
            <person name="Wang J.Q."/>
            <person name="Chen J.H."/>
            <person name="Chen Y.C."/>
            <person name="Chen M.Y."/>
            <person name="Hsieh C.Y."/>
            <person name="Teng S.C."/>
            <person name="Wu K.J."/>
        </authorList>
    </citation>
    <scope>INTERACTION WITH NBN</scope>
</reference>
<reference key="30">
    <citation type="journal article" date="2014" name="J. Proteomics">
        <title>An enzyme assisted RP-RPLC approach for in-depth analysis of human liver phosphoproteome.</title>
        <authorList>
            <person name="Bian Y."/>
            <person name="Song C."/>
            <person name="Cheng K."/>
            <person name="Dong M."/>
            <person name="Wang F."/>
            <person name="Huang J."/>
            <person name="Sun D."/>
            <person name="Wang L."/>
            <person name="Ye M."/>
            <person name="Zou H."/>
        </authorList>
    </citation>
    <scope>PHOSPHORYLATION [LARGE SCALE ANALYSIS] AT SER-1385</scope>
    <scope>IDENTIFICATION BY MASS SPECTROMETRY [LARGE SCALE ANALYSIS]</scope>
    <source>
        <tissue>Liver</tissue>
    </source>
</reference>
<reference key="31">
    <citation type="journal article" date="2015" name="Int. J. Mol. Sci.">
        <title>Tetraspanin 8-rictor-integrin alpha3 complex is required for glioma cell migration.</title>
        <authorList>
            <person name="Pan S.J."/>
            <person name="Zhan S.K."/>
            <person name="Pan Y.X."/>
            <person name="Liu W."/>
            <person name="Bian L.G."/>
            <person name="Sun B."/>
            <person name="Sun Q.F."/>
        </authorList>
    </citation>
    <scope>INTERACTION WITH TSPAN8</scope>
</reference>
<reference key="32">
    <citation type="journal article" date="2015" name="J. Biol. Chem.">
        <title>Rictor Undergoes Glycogen Synthase Kinase 3 (GSK3)-dependent, FBXW7-mediated Ubiquitination and Proteasomal Degradation.</title>
        <authorList>
            <person name="Koo J."/>
            <person name="Wu X."/>
            <person name="Mao Z."/>
            <person name="Khuri F.R."/>
            <person name="Sun S.Y."/>
        </authorList>
    </citation>
    <scope>INTERACTION WITH FBXW7; GSK3A AND GSK3B</scope>
    <scope>PHOSPHORYLATION AT THR-1695</scope>
    <scope>UBIQUITINATION</scope>
    <scope>MUTAGENESIS OF THR-1695</scope>
</reference>
<reference key="33">
    <citation type="journal article" date="2015" name="J. Comput. Biol.">
        <title>Defining the domain arrangement of the mammalian target of rapamycin complex component Rictor protein.</title>
        <authorList>
            <person name="Zhou P."/>
            <person name="Zhang N."/>
            <person name="Nussinov R."/>
            <person name="Ma B."/>
        </authorList>
    </citation>
    <scope>DOMAIN</scope>
</reference>
<reference key="34">
    <citation type="journal article" date="2015" name="Proc. Natl. Acad. Sci. U.S.A.">
        <title>Glucose-dependent acetylation of Rictor promotes targeted cancer therapy resistance.</title>
        <authorList>
            <person name="Masui K."/>
            <person name="Tanaka K."/>
            <person name="Ikegami S."/>
            <person name="Villa G.R."/>
            <person name="Yang H."/>
            <person name="Yong W.H."/>
            <person name="Cloughesy T.F."/>
            <person name="Yamagata K."/>
            <person name="Arai N."/>
            <person name="Cavenee W.K."/>
            <person name="Mischel P.S."/>
        </authorList>
    </citation>
    <scope>ACETYLATION AT LYS-1116; LYS-1119 AND LYS-1125</scope>
    <scope>MUTAGENESIS OF LYS-1116; LYS-1119 AND LYS-1125</scope>
</reference>
<reference key="35">
    <citation type="journal article" date="2016" name="Oncogenesis">
        <title>PTEN negatively regulates mTORC2 formation and signaling in grade IV glioma via Rictor hyperphosphorylation at Thr1135 and direct the mode of action of an mTORC1/2 inhibitor.</title>
        <authorList>
            <person name="Bhattacharya K."/>
            <person name="Maiti S."/>
            <person name="Mandal C."/>
        </authorList>
    </citation>
    <scope>PHOSPHORYLATION AT THR-1135</scope>
</reference>
<reference key="36">
    <citation type="journal article" date="2018" name="Cell">
        <title>Poxviruses Evade Cytosolic Sensing through Disruption of an mTORC1-mTORC2 Regulatory Circuit.</title>
        <authorList>
            <person name="Meade N."/>
            <person name="Furey C."/>
            <person name="Li H."/>
            <person name="Verma R."/>
            <person name="Chai Q."/>
            <person name="Rollins M.G."/>
            <person name="DiGiuseppe S."/>
            <person name="Naghavi M.H."/>
            <person name="Walsh D."/>
        </authorList>
    </citation>
    <scope>INTERACTION WITH VACCINIA VIRUS PROTEIN F17</scope>
</reference>
<reference key="37">
    <citation type="journal article" date="2018" name="Sci. Transl. Med.">
        <title>The PTH/PTHrP-SIK3 pathway affects skeletogenesis through altered mTOR signaling.</title>
        <authorList>
            <person name="Csukasi F."/>
            <person name="Duran I."/>
            <person name="Barad M."/>
            <person name="Barta T."/>
            <person name="Gudernova I."/>
            <person name="Trantirek L."/>
            <person name="Martin J.H."/>
            <person name="Kuo C.Y."/>
            <person name="Woods J."/>
            <person name="Lee H."/>
            <person name="Cohn D.H."/>
            <person name="Krejci P."/>
            <person name="Krakow D."/>
        </authorList>
    </citation>
    <scope>INTERACTION WITH SIK3</scope>
</reference>
<reference key="38">
    <citation type="journal article" date="2019" name="Mol. Cell">
        <title>Lysosome positioning influences mTORC2 and AKT signaling.</title>
        <authorList>
            <person name="Jia R."/>
            <person name="Bonifacino J.S."/>
        </authorList>
    </citation>
    <scope>SUBCELLULAR LOCATION</scope>
</reference>
<reference key="39">
    <citation type="journal article" date="2020" name="Cell Rep.">
        <title>mTORC2 Assembly Is Regulated by USP9X-Mediated Deubiquitination of RICTOR.</title>
        <authorList>
            <person name="Wrobel L."/>
            <person name="Siddiqi F.H."/>
            <person name="Hill S.M."/>
            <person name="Son S.M."/>
            <person name="Karabiyik C."/>
            <person name="Kim H."/>
            <person name="Rubinsztein D.C."/>
        </authorList>
    </citation>
    <scope>INTERACTION WITH USP9X; MTOR AND MAPKAP1</scope>
    <scope>UBIQUITINATION AT LYS-274</scope>
    <scope>DEUBIQUITINATION BY USP9X</scope>
    <scope>MUTAGENESIS OF LYS-274</scope>
</reference>
<reference key="40">
    <citation type="journal article" date="2020" name="Science">
        <title>HEM1 deficiency disrupts mTORC2 and F-actin control in inherited immunodysregulatory disease.</title>
        <authorList>
            <person name="Cook S.A."/>
            <person name="Comrie W.A."/>
            <person name="Poli M.C."/>
            <person name="Similuk M."/>
            <person name="Oler A.J."/>
            <person name="Faruqi A.J."/>
            <person name="Kuhns D.B."/>
            <person name="Yang S."/>
            <person name="Vargas-Hernandez A."/>
            <person name="Carisey A.F."/>
            <person name="Fournier B."/>
            <person name="Anderson D.E."/>
            <person name="Price S."/>
            <person name="Smelkinson M."/>
            <person name="Abou Chahla W."/>
            <person name="Forbes L.R."/>
            <person name="Mace E.M."/>
            <person name="Cao T.N."/>
            <person name="Coban-Akdemir Z.H."/>
            <person name="Jhangiani S.N."/>
            <person name="Muzny D.M."/>
            <person name="Gibbs R.A."/>
            <person name="Lupski J.R."/>
            <person name="Orange J.S."/>
            <person name="Cuvelier G.D.E."/>
            <person name="Al Hassani M."/>
            <person name="Al Kaabi N."/>
            <person name="Al Yafei Z."/>
            <person name="Jyonouchi S."/>
            <person name="Raje N."/>
            <person name="Caldwell J.W."/>
            <person name="Huang Y."/>
            <person name="Burkhardt J.K."/>
            <person name="Latour S."/>
            <person name="Chen B."/>
            <person name="ElGhazali G."/>
            <person name="Rao V.K."/>
            <person name="Chinn I.K."/>
            <person name="Lenardo M.J."/>
        </authorList>
    </citation>
    <scope>INTERACTION WITH NCKAP1L</scope>
</reference>
<reference key="41">
    <citation type="journal article" date="2022" name="Cell Biol. Int.">
        <title>TSPAN8 alleviates high glucose-induced apoptosis and autophagy via targeting mTORC2.</title>
        <authorList>
            <person name="Zhuang L."/>
            <person name="Jin G."/>
            <person name="Hu X."/>
            <person name="Yang Q."/>
            <person name="Pei X."/>
            <person name="Zhao W."/>
        </authorList>
    </citation>
    <scope>FUNCTION</scope>
    <scope>INTERACTION WITH TSPAN8</scope>
</reference>
<reference key="42">
    <citation type="journal article" date="2023" name="Oncogene">
        <title>UBXN2A suppresses the Rictor-mTORC2 signaling pathway, an established tumorigenic pathway in human colorectal cancer.</title>
        <authorList>
            <person name="Sane S."/>
            <person name="Srinivasan R."/>
            <person name="Potts R.A."/>
            <person name="Eikanger M."/>
            <person name="Zagirova D."/>
            <person name="Freeling J."/>
            <person name="Reihe C.A."/>
            <person name="Antony R.M."/>
            <person name="Gupta B.K."/>
            <person name="Lynch D."/>
            <person name="Bleeker J."/>
            <person name="Turaihi H."/>
            <person name="Pillatzki A."/>
            <person name="Zhou W."/>
            <person name="Luo X."/>
            <person name="Linnebacher M."/>
            <person name="Agany D."/>
            <person name="Zohim E.G."/>
            <person name="Humphrey L.E."/>
            <person name="Black A.R."/>
            <person name="Rezvani K."/>
        </authorList>
    </citation>
    <scope>INTERACTION WITH UBXN2A</scope>
</reference>
<reference key="43">
    <citation type="journal article" date="2024" name="Cell. Signal.">
        <title>GCN5L1-mediated acetylation prevents Rictor degradation in cardiac cells after hypoxic stress.</title>
        <authorList>
            <person name="Bugga P."/>
            <person name="Manning J.R."/>
            <person name="Mushala B.A.S."/>
            <person name="Stoner M.W."/>
            <person name="Sembrat J."/>
            <person name="Scott I."/>
        </authorList>
    </citation>
    <scope>ACETYLATION</scope>
</reference>
<reference key="44">
    <citation type="journal article" date="2018" name="Elife">
        <title>Architecture of the human mTORC2 core complex.</title>
        <authorList>
            <person name="Stuttfeld E."/>
            <person name="Aylett C.H."/>
            <person name="Imseng S."/>
            <person name="Boehringer D."/>
            <person name="Scaiola A."/>
            <person name="Sauer E."/>
            <person name="Hall M.N."/>
            <person name="Maier T."/>
            <person name="Ban N."/>
        </authorList>
    </citation>
    <scope>STRUCTURE BY ELECTRON MICROSCOPY OF THE MTORC2 COMPLEX</scope>
    <scope>IDENTIFICATION IN THE MTORC2 COMPLEX</scope>
</reference>
<reference evidence="48" key="45">
    <citation type="journal article" date="2018" name="Cell Res.">
        <title>Cryo-EM structure of human mTOR complex 2.</title>
        <authorList>
            <person name="Chen X."/>
            <person name="Liu M."/>
            <person name="Tian Y."/>
            <person name="Li J."/>
            <person name="Qi Y."/>
            <person name="Zhao D."/>
            <person name="Wu Z."/>
            <person name="Huang M."/>
            <person name="Wong C.C.L."/>
            <person name="Wang H.W."/>
            <person name="Wang J."/>
            <person name="Yang H."/>
            <person name="Xu Y."/>
        </authorList>
    </citation>
    <scope>STRUCTURE BY ELECTRON MICROSCOPY (4.90 ANGSTROMS) OF 1-1018 OF THE MTORC2 COMPLEX</scope>
    <scope>IDENTIFICATION IN THE MTORC2 COMPLEX</scope>
</reference>
<reference evidence="49 50" key="46">
    <citation type="journal article" date="2020" name="Sci. Adv.">
        <title>The 3.2-Aa resolution structure of human mTORC2.</title>
        <authorList>
            <person name="Scaiola A."/>
            <person name="Mangia F."/>
            <person name="Imseng S."/>
            <person name="Boehringer D."/>
            <person name="Berneiser K."/>
            <person name="Shimobayashi M."/>
            <person name="Stuttfeld E."/>
            <person name="Hall M.N."/>
            <person name="Ban N."/>
            <person name="Maier T."/>
        </authorList>
    </citation>
    <scope>STRUCTURE BY ELECTRON MICROSCOPY (3.00 ANGSTROMS) OF THE MTORC2 COMPLEX IN COMPLEX WITH ATP ANALOG AND ZINC</scope>
    <scope>IDENTIFICATION IN THE MTORC2 COMPLEX</scope>
    <scope>FUNCTION</scope>
</reference>
<reference evidence="51 52 53" key="47">
    <citation type="journal article" date="2021" name="Elife">
        <title>Regulation of human mTOR complexes by DEPTOR.</title>
        <authorList>
            <person name="Waelchli M."/>
            <person name="Berneiser K."/>
            <person name="Mangia F."/>
            <person name="Imseng S."/>
            <person name="Craigie L.M."/>
            <person name="Stuttfeld E."/>
            <person name="Hall M.N."/>
            <person name="Maier T."/>
        </authorList>
    </citation>
    <scope>X-RAY CRYSTALLOGRAPHY (1.93 ANGSTROMS) OF 1-230 IN COMPLEX WITH DEPTOR; MLST8; MAPKAP1; MTOR AND RPTOR</scope>
    <scope>IDENTIFICATION IN THE MTORC2 COMPLEX</scope>
</reference>
<reference evidence="54" key="48">
    <citation type="journal article" date="2022" name="J. Biol. Chem.">
        <title>Interactions between mTORC2 core subunits Rictor and mSin1 dictate selective and context-dependent phosphorylation of substrate kinases SGK1 and Akt.</title>
        <authorList>
            <person name="Yu Z."/>
            <person name="Chen J."/>
            <person name="Takagi E."/>
            <person name="Wang F."/>
            <person name="Saha B."/>
            <person name="Liu X."/>
            <person name="Joubert L.M."/>
            <person name="Gleason C.E."/>
            <person name="Jin M."/>
            <person name="Li C."/>
            <person name="Nowotny C."/>
            <person name="Agard D."/>
            <person name="Cheng Y."/>
            <person name="Pearce D."/>
        </authorList>
    </citation>
    <scope>STRUCTURE BY ELECTRON MICROSCOPY (3.28 ANGSTROMS) OF THE MTORC2 COMPLEX</scope>
    <scope>FUNCTION</scope>
    <scope>IDENTIFICATION IN THE MTORC2 COMPLEX</scope>
</reference>
<dbReference type="EMBL" id="AY515854">
    <property type="protein sequence ID" value="AAS79796.1"/>
    <property type="molecule type" value="mRNA"/>
</dbReference>
<dbReference type="EMBL" id="AL834497">
    <property type="protein sequence ID" value="CAD39155.1"/>
    <property type="molecule type" value="mRNA"/>
</dbReference>
<dbReference type="EMBL" id="CR749280">
    <property type="protein sequence ID" value="CAH18135.1"/>
    <property type="status" value="ALT_SEQ"/>
    <property type="molecule type" value="mRNA"/>
</dbReference>
<dbReference type="EMBL" id="AC008964">
    <property type="status" value="NOT_ANNOTATED_CDS"/>
    <property type="molecule type" value="Genomic_DNA"/>
</dbReference>
<dbReference type="EMBL" id="AC109467">
    <property type="status" value="NOT_ANNOTATED_CDS"/>
    <property type="molecule type" value="Genomic_DNA"/>
</dbReference>
<dbReference type="EMBL" id="CH471119">
    <property type="protein sequence ID" value="EAW55980.1"/>
    <property type="molecule type" value="Genomic_DNA"/>
</dbReference>
<dbReference type="EMBL" id="BC051729">
    <property type="protein sequence ID" value="AAH51729.1"/>
    <property type="molecule type" value="mRNA"/>
</dbReference>
<dbReference type="EMBL" id="BC137163">
    <property type="protein sequence ID" value="AAI37164.1"/>
    <property type="molecule type" value="mRNA"/>
</dbReference>
<dbReference type="EMBL" id="BC137164">
    <property type="protein sequence ID" value="AAI37165.1"/>
    <property type="molecule type" value="mRNA"/>
</dbReference>
<dbReference type="EMBL" id="BC144509">
    <property type="protein sequence ID" value="AAI44510.1"/>
    <property type="molecule type" value="mRNA"/>
</dbReference>
<dbReference type="EMBL" id="AB082530">
    <property type="protein sequence ID" value="BAC02708.1"/>
    <property type="molecule type" value="mRNA"/>
</dbReference>
<dbReference type="CCDS" id="CCDS34148.1">
    <molecule id="Q6R327-1"/>
</dbReference>
<dbReference type="CCDS" id="CCDS68861.1">
    <molecule id="Q6R327-3"/>
</dbReference>
<dbReference type="RefSeq" id="NP_001272368.1">
    <molecule id="Q6R327-3"/>
    <property type="nucleotide sequence ID" value="NM_001285439.2"/>
</dbReference>
<dbReference type="RefSeq" id="NP_001272369.1">
    <property type="nucleotide sequence ID" value="NM_001285440.1"/>
</dbReference>
<dbReference type="RefSeq" id="NP_689969.2">
    <molecule id="Q6R327-1"/>
    <property type="nucleotide sequence ID" value="NM_152756.4"/>
</dbReference>
<dbReference type="PDB" id="5ZCS">
    <property type="method" value="EM"/>
    <property type="resolution" value="4.90 A"/>
    <property type="chains" value="E/F=1-1018"/>
</dbReference>
<dbReference type="PDB" id="6ZWM">
    <property type="method" value="EM"/>
    <property type="resolution" value="3.20 A"/>
    <property type="chains" value="E/F=1-1708"/>
</dbReference>
<dbReference type="PDB" id="6ZWO">
    <property type="method" value="EM"/>
    <property type="resolution" value="3.00 A"/>
    <property type="chains" value="F=1-1708"/>
</dbReference>
<dbReference type="PDB" id="7PE7">
    <property type="method" value="EM"/>
    <property type="resolution" value="3.41 A"/>
    <property type="chains" value="E/F=1-1708"/>
</dbReference>
<dbReference type="PDB" id="7PE8">
    <property type="method" value="EM"/>
    <property type="resolution" value="3.20 A"/>
    <property type="chains" value="E=1-1708"/>
</dbReference>
<dbReference type="PDB" id="7PE9">
    <property type="method" value="EM"/>
    <property type="resolution" value="3.70 A"/>
    <property type="chains" value="E=1-1708"/>
</dbReference>
<dbReference type="PDB" id="7TZO">
    <property type="method" value="EM"/>
    <property type="resolution" value="3.28 A"/>
    <property type="chains" value="E/F=1-1708"/>
</dbReference>
<dbReference type="PDBsum" id="5ZCS"/>
<dbReference type="PDBsum" id="6ZWM"/>
<dbReference type="PDBsum" id="6ZWO"/>
<dbReference type="PDBsum" id="7PE7"/>
<dbReference type="PDBsum" id="7PE8"/>
<dbReference type="PDBsum" id="7PE9"/>
<dbReference type="PDBsum" id="7TZO"/>
<dbReference type="EMDB" id="EMD-11488"/>
<dbReference type="EMDB" id="EMD-11489"/>
<dbReference type="EMDB" id="EMD-11490"/>
<dbReference type="EMDB" id="EMD-11491"/>
<dbReference type="EMDB" id="EMD-11492"/>
<dbReference type="EMDB" id="EMD-13347"/>
<dbReference type="EMDB" id="EMD-13348"/>
<dbReference type="EMDB" id="EMD-13349"/>
<dbReference type="EMDB" id="EMD-26213"/>
<dbReference type="EMDB" id="EMD-6913"/>
<dbReference type="SMR" id="Q6R327"/>
<dbReference type="BioGRID" id="128962">
    <property type="interactions" value="792"/>
</dbReference>
<dbReference type="ComplexPortal" id="CPX-4402">
    <property type="entry name" value="mTORC2 complex"/>
</dbReference>
<dbReference type="CORUM" id="Q6R327"/>
<dbReference type="DIP" id="DIP-39479N"/>
<dbReference type="FunCoup" id="Q6R327">
    <property type="interactions" value="2464"/>
</dbReference>
<dbReference type="IntAct" id="Q6R327">
    <property type="interactions" value="172"/>
</dbReference>
<dbReference type="MINT" id="Q6R327"/>
<dbReference type="STRING" id="9606.ENSP00000296782"/>
<dbReference type="BindingDB" id="Q6R327"/>
<dbReference type="ChEMBL" id="CHEMBL1795179"/>
<dbReference type="TCDB" id="8.A.188.1.1">
    <property type="family name" value="the rictor/mtorc2 (rictor) family"/>
</dbReference>
<dbReference type="GlyCosmos" id="Q6R327">
    <property type="glycosylation" value="1 site, 1 glycan"/>
</dbReference>
<dbReference type="GlyGen" id="Q6R327">
    <property type="glycosylation" value="4 sites, 1 N-linked glycan (1 site), 1 O-linked glycan (3 sites)"/>
</dbReference>
<dbReference type="iPTMnet" id="Q6R327"/>
<dbReference type="PhosphoSitePlus" id="Q6R327"/>
<dbReference type="SwissPalm" id="Q6R327"/>
<dbReference type="BioMuta" id="RICTOR"/>
<dbReference type="DMDM" id="74710068"/>
<dbReference type="CPTAC" id="CPTAC-1337"/>
<dbReference type="jPOST" id="Q6R327"/>
<dbReference type="MassIVE" id="Q6R327"/>
<dbReference type="PaxDb" id="9606-ENSP00000296782"/>
<dbReference type="PeptideAtlas" id="Q6R327"/>
<dbReference type="ProteomicsDB" id="67310">
    <molecule id="Q6R327-1"/>
</dbReference>
<dbReference type="ProteomicsDB" id="67311">
    <molecule id="Q6R327-3"/>
</dbReference>
<dbReference type="ProteomicsDB" id="67312">
    <molecule id="Q6R327-4"/>
</dbReference>
<dbReference type="Pumba" id="Q6R327"/>
<dbReference type="Antibodypedia" id="23075">
    <property type="antibodies" value="652 antibodies from 40 providers"/>
</dbReference>
<dbReference type="DNASU" id="253260"/>
<dbReference type="Ensembl" id="ENST00000296782.10">
    <molecule id="Q6R327-3"/>
    <property type="protein sequence ID" value="ENSP00000296782.5"/>
    <property type="gene ID" value="ENSG00000164327.14"/>
</dbReference>
<dbReference type="Ensembl" id="ENST00000357387.8">
    <molecule id="Q6R327-1"/>
    <property type="protein sequence ID" value="ENSP00000349959.3"/>
    <property type="gene ID" value="ENSG00000164327.14"/>
</dbReference>
<dbReference type="Ensembl" id="ENST00000511516.5">
    <molecule id="Q6R327-4"/>
    <property type="protein sequence ID" value="ENSP00000423019.1"/>
    <property type="gene ID" value="ENSG00000164327.14"/>
</dbReference>
<dbReference type="GeneID" id="253260"/>
<dbReference type="KEGG" id="hsa:253260"/>
<dbReference type="MANE-Select" id="ENST00000357387.8">
    <property type="protein sequence ID" value="ENSP00000349959.3"/>
    <property type="RefSeq nucleotide sequence ID" value="NM_152756.5"/>
    <property type="RefSeq protein sequence ID" value="NP_689969.2"/>
</dbReference>
<dbReference type="UCSC" id="uc003jlo.4">
    <molecule id="Q6R327-1"/>
    <property type="organism name" value="human"/>
</dbReference>
<dbReference type="AGR" id="HGNC:28611"/>
<dbReference type="CTD" id="253260"/>
<dbReference type="DisGeNET" id="253260"/>
<dbReference type="GeneCards" id="RICTOR"/>
<dbReference type="HGNC" id="HGNC:28611">
    <property type="gene designation" value="RICTOR"/>
</dbReference>
<dbReference type="HPA" id="ENSG00000164327">
    <property type="expression patterns" value="Low tissue specificity"/>
</dbReference>
<dbReference type="MalaCards" id="RICTOR"/>
<dbReference type="MIM" id="609022">
    <property type="type" value="gene"/>
</dbReference>
<dbReference type="neXtProt" id="NX_Q6R327"/>
<dbReference type="OpenTargets" id="ENSG00000164327"/>
<dbReference type="PharmGKB" id="PA165660455"/>
<dbReference type="VEuPathDB" id="HostDB:ENSG00000164327"/>
<dbReference type="eggNOG" id="KOG3694">
    <property type="taxonomic scope" value="Eukaryota"/>
</dbReference>
<dbReference type="GeneTree" id="ENSGT00390000002096"/>
<dbReference type="HOGENOM" id="CLU_001013_2_0_1"/>
<dbReference type="InParanoid" id="Q6R327"/>
<dbReference type="OMA" id="METKREC"/>
<dbReference type="OrthoDB" id="271111at2759"/>
<dbReference type="PAN-GO" id="Q6R327">
    <property type="GO annotations" value="4 GO annotations based on evolutionary models"/>
</dbReference>
<dbReference type="PhylomeDB" id="Q6R327"/>
<dbReference type="TreeFam" id="TF343656"/>
<dbReference type="PathwayCommons" id="Q6R327"/>
<dbReference type="Reactome" id="R-HSA-1257604">
    <property type="pathway name" value="PIP3 activates AKT signaling"/>
</dbReference>
<dbReference type="Reactome" id="R-HSA-389357">
    <property type="pathway name" value="CD28 dependent PI3K/Akt signaling"/>
</dbReference>
<dbReference type="Reactome" id="R-HSA-5218920">
    <property type="pathway name" value="VEGFR2 mediated vascular permeability"/>
</dbReference>
<dbReference type="Reactome" id="R-HSA-5674400">
    <property type="pathway name" value="Constitutive Signaling by AKT1 E17K in Cancer"/>
</dbReference>
<dbReference type="Reactome" id="R-HSA-6804757">
    <property type="pathway name" value="Regulation of TP53 Degradation"/>
</dbReference>
<dbReference type="Reactome" id="R-HSA-9856530">
    <property type="pathway name" value="High laminar flow shear stress activates signaling by PIEZO1 and PECAM1:CDH5:KDR in endothelial cells"/>
</dbReference>
<dbReference type="SignaLink" id="Q6R327"/>
<dbReference type="SIGNOR" id="Q6R327"/>
<dbReference type="BioGRID-ORCS" id="253260">
    <property type="hits" value="300 hits in 1187 CRISPR screens"/>
</dbReference>
<dbReference type="ChiTaRS" id="RICTOR">
    <property type="organism name" value="human"/>
</dbReference>
<dbReference type="GeneWiki" id="RICTOR"/>
<dbReference type="GenomeRNAi" id="253260"/>
<dbReference type="Pharos" id="Q6R327">
    <property type="development level" value="Tbio"/>
</dbReference>
<dbReference type="PRO" id="PR:Q6R327"/>
<dbReference type="Proteomes" id="UP000005640">
    <property type="component" value="Chromosome 5"/>
</dbReference>
<dbReference type="RNAct" id="Q6R327">
    <property type="molecule type" value="protein"/>
</dbReference>
<dbReference type="Bgee" id="ENSG00000164327">
    <property type="expression patterns" value="Expressed in kidney epithelium and 195 other cell types or tissues"/>
</dbReference>
<dbReference type="ExpressionAtlas" id="Q6R327">
    <property type="expression patterns" value="baseline and differential"/>
</dbReference>
<dbReference type="GO" id="GO:0005829">
    <property type="term" value="C:cytosol"/>
    <property type="evidence" value="ECO:0000304"/>
    <property type="project" value="Reactome"/>
</dbReference>
<dbReference type="GO" id="GO:0005783">
    <property type="term" value="C:endoplasmic reticulum"/>
    <property type="evidence" value="ECO:0000314"/>
    <property type="project" value="UniProtKB"/>
</dbReference>
<dbReference type="GO" id="GO:0005789">
    <property type="term" value="C:endoplasmic reticulum membrane"/>
    <property type="evidence" value="ECO:0007669"/>
    <property type="project" value="UniProtKB-SubCell"/>
</dbReference>
<dbReference type="GO" id="GO:0005794">
    <property type="term" value="C:Golgi apparatus"/>
    <property type="evidence" value="ECO:0000305"/>
    <property type="project" value="UniProt"/>
</dbReference>
<dbReference type="GO" id="GO:0005765">
    <property type="term" value="C:lysosomal membrane"/>
    <property type="evidence" value="ECO:0007669"/>
    <property type="project" value="UniProtKB-SubCell"/>
</dbReference>
<dbReference type="GO" id="GO:0005764">
    <property type="term" value="C:lysosome"/>
    <property type="evidence" value="ECO:0000314"/>
    <property type="project" value="UniProtKB"/>
</dbReference>
<dbReference type="GO" id="GO:0005886">
    <property type="term" value="C:plasma membrane"/>
    <property type="evidence" value="ECO:0000314"/>
    <property type="project" value="UniProtKB"/>
</dbReference>
<dbReference type="GO" id="GO:1902554">
    <property type="term" value="C:serine/threonine protein kinase complex"/>
    <property type="evidence" value="ECO:0000314"/>
    <property type="project" value="UniProt"/>
</dbReference>
<dbReference type="GO" id="GO:0031932">
    <property type="term" value="C:TORC2 complex"/>
    <property type="evidence" value="ECO:0000314"/>
    <property type="project" value="UniProtKB"/>
</dbReference>
<dbReference type="GO" id="GO:0005524">
    <property type="term" value="F:ATP binding"/>
    <property type="evidence" value="ECO:0000314"/>
    <property type="project" value="UniProtKB"/>
</dbReference>
<dbReference type="GO" id="GO:0140767">
    <property type="term" value="F:enzyme-substrate adaptor activity"/>
    <property type="evidence" value="ECO:0000314"/>
    <property type="project" value="UniProtKB"/>
</dbReference>
<dbReference type="GO" id="GO:0060090">
    <property type="term" value="F:molecular adaptor activity"/>
    <property type="evidence" value="ECO:0000314"/>
    <property type="project" value="DisProt"/>
</dbReference>
<dbReference type="GO" id="GO:0019901">
    <property type="term" value="F:protein kinase binding"/>
    <property type="evidence" value="ECO:0000353"/>
    <property type="project" value="ParkinsonsUK-UCL"/>
</dbReference>
<dbReference type="GO" id="GO:0043539">
    <property type="term" value="F:protein serine/threonine kinase activator activity"/>
    <property type="evidence" value="ECO:0000314"/>
    <property type="project" value="UniProt"/>
</dbReference>
<dbReference type="GO" id="GO:0043022">
    <property type="term" value="F:ribosome binding"/>
    <property type="evidence" value="ECO:0000314"/>
    <property type="project" value="UniProtKB"/>
</dbReference>
<dbReference type="GO" id="GO:0008270">
    <property type="term" value="F:zinc ion binding"/>
    <property type="evidence" value="ECO:0000314"/>
    <property type="project" value="UniProtKB"/>
</dbReference>
<dbReference type="GO" id="GO:0030036">
    <property type="term" value="P:actin cytoskeleton organization"/>
    <property type="evidence" value="ECO:0000315"/>
    <property type="project" value="UniProtKB"/>
</dbReference>
<dbReference type="GO" id="GO:0031669">
    <property type="term" value="P:cellular response to nutrient levels"/>
    <property type="evidence" value="ECO:0000303"/>
    <property type="project" value="ComplexPortal"/>
</dbReference>
<dbReference type="GO" id="GO:0007010">
    <property type="term" value="P:cytoskeleton organization"/>
    <property type="evidence" value="ECO:0000303"/>
    <property type="project" value="ComplexPortal"/>
</dbReference>
<dbReference type="GO" id="GO:0009792">
    <property type="term" value="P:embryo development ending in birth or egg hatching"/>
    <property type="evidence" value="ECO:0000250"/>
    <property type="project" value="UniProtKB"/>
</dbReference>
<dbReference type="GO" id="GO:0008610">
    <property type="term" value="P:lipid biosynthetic process"/>
    <property type="evidence" value="ECO:0000250"/>
    <property type="project" value="UniProtKB"/>
</dbReference>
<dbReference type="GO" id="GO:0043066">
    <property type="term" value="P:negative regulation of apoptotic process"/>
    <property type="evidence" value="ECO:0000303"/>
    <property type="project" value="ComplexPortal"/>
</dbReference>
<dbReference type="GO" id="GO:0030838">
    <property type="term" value="P:positive regulation of actin filament polymerization"/>
    <property type="evidence" value="ECO:0007669"/>
    <property type="project" value="Ensembl"/>
</dbReference>
<dbReference type="GO" id="GO:0030307">
    <property type="term" value="P:positive regulation of cell growth"/>
    <property type="evidence" value="ECO:0000303"/>
    <property type="project" value="ComplexPortal"/>
</dbReference>
<dbReference type="GO" id="GO:0030335">
    <property type="term" value="P:positive regulation of cell migration"/>
    <property type="evidence" value="ECO:0000315"/>
    <property type="project" value="ParkinsonsUK-UCL"/>
</dbReference>
<dbReference type="GO" id="GO:0001938">
    <property type="term" value="P:positive regulation of endothelial cell proliferation"/>
    <property type="evidence" value="ECO:0007669"/>
    <property type="project" value="Ensembl"/>
</dbReference>
<dbReference type="GO" id="GO:0051897">
    <property type="term" value="P:positive regulation of phosphatidylinositol 3-kinase/protein kinase B signal transduction"/>
    <property type="evidence" value="ECO:0000314"/>
    <property type="project" value="UniProtKB"/>
</dbReference>
<dbReference type="GO" id="GO:0032008">
    <property type="term" value="P:positive regulation of TOR signaling"/>
    <property type="evidence" value="ECO:0000315"/>
    <property type="project" value="UniProtKB"/>
</dbReference>
<dbReference type="GO" id="GO:0032956">
    <property type="term" value="P:regulation of actin cytoskeleton organization"/>
    <property type="evidence" value="ECO:0000315"/>
    <property type="project" value="UniProtKB"/>
</dbReference>
<dbReference type="GO" id="GO:2000114">
    <property type="term" value="P:regulation of establishment of cell polarity"/>
    <property type="evidence" value="ECO:0007669"/>
    <property type="project" value="Ensembl"/>
</dbReference>
<dbReference type="GO" id="GO:0010468">
    <property type="term" value="P:regulation of gene expression"/>
    <property type="evidence" value="ECO:0007669"/>
    <property type="project" value="Ensembl"/>
</dbReference>
<dbReference type="GO" id="GO:0050727">
    <property type="term" value="P:regulation of inflammatory response"/>
    <property type="evidence" value="ECO:0007669"/>
    <property type="project" value="Ensembl"/>
</dbReference>
<dbReference type="GO" id="GO:0051896">
    <property type="term" value="P:regulation of phosphatidylinositol 3-kinase/protein kinase B signal transduction"/>
    <property type="evidence" value="ECO:0000314"/>
    <property type="project" value="UniProtKB"/>
</dbReference>
<dbReference type="GO" id="GO:0038203">
    <property type="term" value="P:TORC2 signaling"/>
    <property type="evidence" value="ECO:0000314"/>
    <property type="project" value="UniProtKB"/>
</dbReference>
<dbReference type="DisProt" id="DP02692"/>
<dbReference type="InterPro" id="IPR016024">
    <property type="entry name" value="ARM-type_fold"/>
</dbReference>
<dbReference type="InterPro" id="IPR028268">
    <property type="entry name" value="Pianissimo_fam"/>
</dbReference>
<dbReference type="InterPro" id="IPR028267">
    <property type="entry name" value="Pianissimo_N"/>
</dbReference>
<dbReference type="InterPro" id="IPR029453">
    <property type="entry name" value="Rictor_IV"/>
</dbReference>
<dbReference type="InterPro" id="IPR029451">
    <property type="entry name" value="RICTOR_M"/>
</dbReference>
<dbReference type="InterPro" id="IPR029259">
    <property type="entry name" value="RICTOR_phospho"/>
</dbReference>
<dbReference type="InterPro" id="IPR029452">
    <property type="entry name" value="RICTOR_V"/>
</dbReference>
<dbReference type="PANTHER" id="PTHR13298">
    <property type="entry name" value="CYTOSOLIC REGULATOR PIANISSIMO"/>
    <property type="match status" value="1"/>
</dbReference>
<dbReference type="PANTHER" id="PTHR13298:SF11">
    <property type="entry name" value="RAPAMYCIN-INSENSITIVE COMPANION OF MTOR"/>
    <property type="match status" value="1"/>
</dbReference>
<dbReference type="Pfam" id="PF14663">
    <property type="entry name" value="RasGEF_N_2"/>
    <property type="match status" value="1"/>
</dbReference>
<dbReference type="Pfam" id="PF14666">
    <property type="entry name" value="RICTOR_M"/>
    <property type="match status" value="1"/>
</dbReference>
<dbReference type="Pfam" id="PF14664">
    <property type="entry name" value="RICTOR_N"/>
    <property type="match status" value="1"/>
</dbReference>
<dbReference type="Pfam" id="PF14665">
    <property type="entry name" value="RICTOR_phospho"/>
    <property type="match status" value="1"/>
</dbReference>
<dbReference type="Pfam" id="PF14668">
    <property type="entry name" value="RICTOR_V"/>
    <property type="match status" value="1"/>
</dbReference>
<dbReference type="SMART" id="SM01303">
    <property type="entry name" value="RasGEF_N_2"/>
    <property type="match status" value="1"/>
</dbReference>
<dbReference type="SMART" id="SM01307">
    <property type="entry name" value="RICTOR_M"/>
    <property type="match status" value="1"/>
</dbReference>
<dbReference type="SMART" id="SM01308">
    <property type="entry name" value="RICTOR_N"/>
    <property type="match status" value="1"/>
</dbReference>
<dbReference type="SMART" id="SM01309">
    <property type="entry name" value="RICTOR_phospho"/>
    <property type="match status" value="1"/>
</dbReference>
<dbReference type="SMART" id="SM01310">
    <property type="entry name" value="RICTOR_V"/>
    <property type="match status" value="1"/>
</dbReference>
<dbReference type="SUPFAM" id="SSF48371">
    <property type="entry name" value="ARM repeat"/>
    <property type="match status" value="2"/>
</dbReference>
<accession>Q6R327</accession>
<accession>B2RNX0</accession>
<accession>B7ZMF7</accession>
<accession>Q68DT5</accession>
<accession>Q86UB7</accession>
<accession>Q8N3A0</accession>
<accession>Q8NCM6</accession>
<name>RICTR_HUMAN</name>
<gene>
    <name evidence="37 47" type="primary">RICTOR</name>
    <name evidence="36" type="synonym">KIAA1999</name>
</gene>
<keyword id="KW-0002">3D-structure</keyword>
<keyword id="KW-0007">Acetylation</keyword>
<keyword id="KW-0025">Alternative splicing</keyword>
<keyword id="KW-0067">ATP-binding</keyword>
<keyword id="KW-1003">Cell membrane</keyword>
<keyword id="KW-0217">Developmental protein</keyword>
<keyword id="KW-0256">Endoplasmic reticulum</keyword>
<keyword id="KW-0945">Host-virus interaction</keyword>
<keyword id="KW-1017">Isopeptide bond</keyword>
<keyword id="KW-0458">Lysosome</keyword>
<keyword id="KW-0472">Membrane</keyword>
<keyword id="KW-0547">Nucleotide-binding</keyword>
<keyword id="KW-0597">Phosphoprotein</keyword>
<keyword id="KW-1267">Proteomics identification</keyword>
<keyword id="KW-1185">Reference proteome</keyword>
<keyword id="KW-0832">Ubl conjugation</keyword>
<keyword id="KW-0862">Zinc</keyword>
<evidence type="ECO:0000250" key="1">
    <source>
        <dbReference type="UniProtKB" id="Q6QI06"/>
    </source>
</evidence>
<evidence type="ECO:0000256" key="2">
    <source>
        <dbReference type="SAM" id="MobiDB-lite"/>
    </source>
</evidence>
<evidence type="ECO:0000269" key="3">
    <source>
    </source>
</evidence>
<evidence type="ECO:0000269" key="4">
    <source>
    </source>
</evidence>
<evidence type="ECO:0000269" key="5">
    <source>
    </source>
</evidence>
<evidence type="ECO:0000269" key="6">
    <source>
    </source>
</evidence>
<evidence type="ECO:0000269" key="7">
    <source>
    </source>
</evidence>
<evidence type="ECO:0000269" key="8">
    <source>
    </source>
</evidence>
<evidence type="ECO:0000269" key="9">
    <source>
    </source>
</evidence>
<evidence type="ECO:0000269" key="10">
    <source>
    </source>
</evidence>
<evidence type="ECO:0000269" key="11">
    <source>
    </source>
</evidence>
<evidence type="ECO:0000269" key="12">
    <source>
    </source>
</evidence>
<evidence type="ECO:0000269" key="13">
    <source>
    </source>
</evidence>
<evidence type="ECO:0000269" key="14">
    <source>
    </source>
</evidence>
<evidence type="ECO:0000269" key="15">
    <source>
    </source>
</evidence>
<evidence type="ECO:0000269" key="16">
    <source>
    </source>
</evidence>
<evidence type="ECO:0000269" key="17">
    <source>
    </source>
</evidence>
<evidence type="ECO:0000269" key="18">
    <source>
    </source>
</evidence>
<evidence type="ECO:0000269" key="19">
    <source>
    </source>
</evidence>
<evidence type="ECO:0000269" key="20">
    <source>
    </source>
</evidence>
<evidence type="ECO:0000269" key="21">
    <source>
    </source>
</evidence>
<evidence type="ECO:0000269" key="22">
    <source>
    </source>
</evidence>
<evidence type="ECO:0000269" key="23">
    <source>
    </source>
</evidence>
<evidence type="ECO:0000269" key="24">
    <source>
    </source>
</evidence>
<evidence type="ECO:0000269" key="25">
    <source>
    </source>
</evidence>
<evidence type="ECO:0000269" key="26">
    <source>
    </source>
</evidence>
<evidence type="ECO:0000269" key="27">
    <source>
    </source>
</evidence>
<evidence type="ECO:0000269" key="28">
    <source>
    </source>
</evidence>
<evidence type="ECO:0000269" key="29">
    <source>
    </source>
</evidence>
<evidence type="ECO:0000269" key="30">
    <source>
    </source>
</evidence>
<evidence type="ECO:0000269" key="31">
    <source>
    </source>
</evidence>
<evidence type="ECO:0000269" key="32">
    <source>
    </source>
</evidence>
<evidence type="ECO:0000269" key="33">
    <source>
    </source>
</evidence>
<evidence type="ECO:0000269" key="34">
    <source>
    </source>
</evidence>
<evidence type="ECO:0000269" key="35">
    <source>
    </source>
</evidence>
<evidence type="ECO:0000303" key="36">
    <source>
    </source>
</evidence>
<evidence type="ECO:0000303" key="37">
    <source>
    </source>
</evidence>
<evidence type="ECO:0000303" key="38">
    <source>
    </source>
</evidence>
<evidence type="ECO:0000303" key="39">
    <source>
    </source>
</evidence>
<evidence type="ECO:0000305" key="40"/>
<evidence type="ECO:0000305" key="41">
    <source>
    </source>
</evidence>
<evidence type="ECO:0000305" key="42">
    <source>
    </source>
</evidence>
<evidence type="ECO:0000312" key="43">
    <source>
        <dbReference type="EMBL" id="AAH51729.1"/>
    </source>
</evidence>
<evidence type="ECO:0000312" key="44">
    <source>
        <dbReference type="EMBL" id="AAS79796.1"/>
    </source>
</evidence>
<evidence type="ECO:0000312" key="45">
    <source>
        <dbReference type="EMBL" id="BAC02708.1"/>
    </source>
</evidence>
<evidence type="ECO:0000312" key="46">
    <source>
        <dbReference type="EMBL" id="CAH18135.1"/>
    </source>
</evidence>
<evidence type="ECO:0000312" key="47">
    <source>
        <dbReference type="HGNC" id="HGNC:28611"/>
    </source>
</evidence>
<evidence type="ECO:0007744" key="48">
    <source>
        <dbReference type="PDB" id="5ZCS"/>
    </source>
</evidence>
<evidence type="ECO:0007744" key="49">
    <source>
        <dbReference type="PDB" id="6ZWM"/>
    </source>
</evidence>
<evidence type="ECO:0007744" key="50">
    <source>
        <dbReference type="PDB" id="6ZWO"/>
    </source>
</evidence>
<evidence type="ECO:0007744" key="51">
    <source>
        <dbReference type="PDB" id="7PE7"/>
    </source>
</evidence>
<evidence type="ECO:0007744" key="52">
    <source>
        <dbReference type="PDB" id="7PE8"/>
    </source>
</evidence>
<evidence type="ECO:0007744" key="53">
    <source>
        <dbReference type="PDB" id="7PE9"/>
    </source>
</evidence>
<evidence type="ECO:0007744" key="54">
    <source>
        <dbReference type="PDB" id="7TZO"/>
    </source>
</evidence>
<evidence type="ECO:0007744" key="55">
    <source>
    </source>
</evidence>
<evidence type="ECO:0007744" key="56">
    <source>
    </source>
</evidence>
<evidence type="ECO:0007744" key="57">
    <source>
    </source>
</evidence>
<evidence type="ECO:0007744" key="58">
    <source>
    </source>
</evidence>
<evidence type="ECO:0007744" key="59">
    <source>
    </source>
</evidence>
<evidence type="ECO:0007744" key="60">
    <source>
    </source>
</evidence>
<evidence type="ECO:0007744" key="61">
    <source>
    </source>
</evidence>
<evidence type="ECO:0007744" key="62">
    <source>
    </source>
</evidence>
<evidence type="ECO:0007744" key="63">
    <source>
    </source>
</evidence>
<evidence type="ECO:0007829" key="64">
    <source>
        <dbReference type="PDB" id="6ZWM"/>
    </source>
</evidence>
<evidence type="ECO:0007829" key="65">
    <source>
        <dbReference type="PDB" id="6ZWO"/>
    </source>
</evidence>
<evidence type="ECO:0007829" key="66">
    <source>
        <dbReference type="PDB" id="7PE7"/>
    </source>
</evidence>
<evidence type="ECO:0007829" key="67">
    <source>
        <dbReference type="PDB" id="7PE8"/>
    </source>
</evidence>
<evidence type="ECO:0007829" key="68">
    <source>
        <dbReference type="PDB" id="7TZO"/>
    </source>
</evidence>
<feature type="chain" id="PRO_0000308179" description="Rapamycin-insensitive companion of mTOR">
    <location>
        <begin position="1"/>
        <end position="1708"/>
    </location>
</feature>
<feature type="region of interest" description="Interaction with NBN" evidence="18">
    <location>
        <begin position="1"/>
        <end position="789"/>
    </location>
</feature>
<feature type="region of interest" description="Ribosome-binding domain" evidence="41">
    <location>
        <begin position="521"/>
        <end position="570"/>
    </location>
</feature>
<feature type="region of interest" description="Disordered" evidence="2">
    <location>
        <begin position="1022"/>
        <end position="1041"/>
    </location>
</feature>
<feature type="region of interest" description="Disordered" evidence="2">
    <location>
        <begin position="1103"/>
        <end position="1134"/>
    </location>
</feature>
<feature type="region of interest" description="Disordered" evidence="2">
    <location>
        <begin position="1204"/>
        <end position="1252"/>
    </location>
</feature>
<feature type="region of interest" description="Disordered" evidence="2">
    <location>
        <begin position="1275"/>
        <end position="1298"/>
    </location>
</feature>
<feature type="compositionally biased region" description="Polar residues" evidence="2">
    <location>
        <begin position="1206"/>
        <end position="1221"/>
    </location>
</feature>
<feature type="compositionally biased region" description="Low complexity" evidence="2">
    <location>
        <begin position="1222"/>
        <end position="1240"/>
    </location>
</feature>
<feature type="compositionally biased region" description="Low complexity" evidence="2">
    <location>
        <begin position="1275"/>
        <end position="1288"/>
    </location>
</feature>
<feature type="binding site" evidence="42 49">
    <location>
        <position position="543"/>
    </location>
    <ligand>
        <name>ATP</name>
        <dbReference type="ChEBI" id="CHEBI:30616"/>
    </ligand>
</feature>
<feature type="binding site" evidence="42 49">
    <location>
        <position position="572"/>
    </location>
    <ligand>
        <name>ATP</name>
        <dbReference type="ChEBI" id="CHEBI:30616"/>
    </ligand>
</feature>
<feature type="binding site" evidence="42 49">
    <location>
        <position position="576"/>
    </location>
    <ligand>
        <name>ATP</name>
        <dbReference type="ChEBI" id="CHEBI:30616"/>
    </ligand>
</feature>
<feature type="binding site" evidence="29 49">
    <location>
        <position position="1515"/>
    </location>
    <ligand>
        <name>Zn(2+)</name>
        <dbReference type="ChEBI" id="CHEBI:29105"/>
    </ligand>
</feature>
<feature type="binding site" evidence="29 49">
    <location>
        <position position="1520"/>
    </location>
    <ligand>
        <name>Zn(2+)</name>
        <dbReference type="ChEBI" id="CHEBI:29105"/>
    </ligand>
</feature>
<feature type="binding site" evidence="29 49">
    <location>
        <position position="1523"/>
    </location>
    <ligand>
        <name>Zn(2+)</name>
        <dbReference type="ChEBI" id="CHEBI:29105"/>
    </ligand>
</feature>
<feature type="binding site" evidence="29 49">
    <location>
        <position position="1651"/>
    </location>
    <ligand>
        <name>Zn(2+)</name>
        <dbReference type="ChEBI" id="CHEBI:29105"/>
    </ligand>
</feature>
<feature type="modified residue" description="Phosphoserine" evidence="10 55 56 57 58 59 60 61 62">
    <location>
        <position position="21"/>
    </location>
</feature>
<feature type="modified residue" description="Phosphoserine" evidence="10">
    <location>
        <position position="35"/>
    </location>
</feature>
<feature type="modified residue" description="Phosphoserine" evidence="10">
    <location>
        <position position="265"/>
    </location>
</feature>
<feature type="modified residue" description="N6-acetyllysine" evidence="16">
    <location>
        <position position="1092"/>
    </location>
</feature>
<feature type="modified residue" description="N6-acetyllysine" evidence="16">
    <location>
        <position position="1095"/>
    </location>
</feature>
<feature type="modified residue" description="Phosphothreonine" evidence="10 62">
    <location>
        <position position="1103"/>
    </location>
</feature>
<feature type="modified residue" description="N6-acetyllysine" evidence="16 21">
    <location>
        <position position="1116"/>
    </location>
</feature>
<feature type="modified residue" description="N6-acetyllysine" evidence="16 21">
    <location>
        <position position="1119"/>
    </location>
</feature>
<feature type="modified residue" description="N6-acetyllysine" evidence="16 21">
    <location>
        <position position="1125"/>
    </location>
</feature>
<feature type="modified residue" description="Phosphothreonine; by RPS6KB1" evidence="10 11 12 22 62">
    <location>
        <position position="1135"/>
    </location>
</feature>
<feature type="modified residue" description="Phosphoserine" evidence="10">
    <location>
        <position position="1138"/>
    </location>
</feature>
<feature type="modified residue" description="Phosphoserine" evidence="62">
    <location>
        <position position="1162"/>
    </location>
</feature>
<feature type="modified residue" description="Phosphoserine" evidence="10">
    <location>
        <position position="1219"/>
    </location>
</feature>
<feature type="modified residue" description="Phosphoserine; by GSK3-beta" evidence="10 13">
    <location>
        <position position="1235"/>
    </location>
</feature>
<feature type="modified residue" description="Phosphothreonine" evidence="10">
    <location>
        <position position="1271"/>
    </location>
</feature>
<feature type="modified residue" description="Phosphoserine" evidence="10">
    <location>
        <position position="1274"/>
    </location>
</feature>
<feature type="modified residue" description="Phosphoserine" evidence="62">
    <location>
        <position position="1278"/>
    </location>
</feature>
<feature type="modified residue" description="Phosphoserine" evidence="57 62">
    <location>
        <position position="1282"/>
    </location>
</feature>
<feature type="modified residue" description="Phosphoserine" evidence="59">
    <location>
        <position position="1284"/>
    </location>
</feature>
<feature type="modified residue" description="Phosphothreonine" evidence="62">
    <location>
        <position position="1295"/>
    </location>
</feature>
<feature type="modified residue" description="Phosphoserine" evidence="10 62">
    <location>
        <position position="1302"/>
    </location>
</feature>
<feature type="modified residue" description="Phosphoserine" evidence="10 62">
    <location>
        <position position="1313"/>
    </location>
</feature>
<feature type="modified residue" description="Phosphothreonine" evidence="62">
    <location>
        <position position="1332"/>
    </location>
</feature>
<feature type="modified residue" description="Phosphoserine" evidence="10 62">
    <location>
        <position position="1346"/>
    </location>
</feature>
<feature type="modified residue" description="Phosphoserine" evidence="10 62">
    <location>
        <position position="1353"/>
    </location>
</feature>
<feature type="modified residue" description="Phosphothreonine" evidence="10">
    <location>
        <position position="1376"/>
    </location>
</feature>
<feature type="modified residue" description="Phosphoserine" evidence="62 63">
    <location>
        <position position="1385"/>
    </location>
</feature>
<feature type="modified residue" description="Phosphotyrosine" evidence="10">
    <location>
        <position position="1386"/>
    </location>
</feature>
<feature type="modified residue" description="Phosphoserine" evidence="10 57 59">
    <location>
        <position position="1388"/>
    </location>
</feature>
<feature type="modified residue" description="Phosphoserine" evidence="10 57 58">
    <location>
        <position position="1396"/>
    </location>
</feature>
<feature type="modified residue" description="Phosphoserine" evidence="59">
    <location>
        <position position="1411"/>
    </location>
</feature>
<feature type="modified residue" description="Phosphoserine" evidence="10">
    <location>
        <position position="1571"/>
    </location>
</feature>
<feature type="modified residue" description="Phosphoserine" evidence="10">
    <location>
        <position position="1574"/>
    </location>
</feature>
<feature type="modified residue" description="Phosphoserine" evidence="10">
    <location>
        <position position="1577"/>
    </location>
</feature>
<feature type="modified residue" description="Phosphoserine" evidence="61">
    <location>
        <position position="1591"/>
    </location>
</feature>
<feature type="modified residue" description="Phosphothreonine; by GSK3-alpha and GSK3-beta" evidence="20">
    <location>
        <position position="1695"/>
    </location>
</feature>
<feature type="cross-link" description="Glycyl lysine isopeptide (Lys-Gly) (interchain with G-Cter in ubiquitin)" evidence="30">
    <location>
        <position position="274"/>
    </location>
</feature>
<feature type="splice variant" id="VSP_038362" description="In isoform 2." evidence="39">
    <original>RILAPY</original>
    <variation>NFSTLY</variation>
    <location>
        <begin position="252"/>
        <end position="257"/>
    </location>
</feature>
<feature type="splice variant" id="VSP_038363" description="In isoform 2." evidence="39">
    <location>
        <begin position="258"/>
        <end position="1708"/>
    </location>
</feature>
<feature type="splice variant" id="VSP_052581" description="In isoform 3." evidence="38 39">
    <original>R</original>
    <variation>RIDFKKKHVGGIRSLRPTITNNLFR</variation>
    <location>
        <position position="1379"/>
    </location>
</feature>
<feature type="sequence variant" id="VAR_051320" description="In dbSNP:rs2043112." evidence="5 9">
    <original>S</original>
    <variation>F</variation>
    <location>
        <position position="837"/>
    </location>
</feature>
<feature type="mutagenesis site" description="Abolishes deubiquitination by USP9X and increases interaction with MTOR. No effect on interaction with SIN1." evidence="30">
    <original>K</original>
    <variation>G</variation>
    <location>
        <position position="274"/>
    </location>
</feature>
<feature type="mutagenesis site" description="In M1; does not affect acetylation." evidence="16">
    <original>KDK</original>
    <variation>RDR</variation>
    <location>
        <begin position="1080"/>
        <end position="1082"/>
    </location>
</feature>
<feature type="mutagenesis site" description="In M2; decreased acetylation and activity of the mTORC2 complex." evidence="16">
    <original>KLVK</original>
    <variation>RLVR</variation>
    <location>
        <begin position="1092"/>
        <end position="1095"/>
    </location>
</feature>
<feature type="mutagenesis site" description="In M3; does not affect acetylation." evidence="16">
    <original>KK</original>
    <variation>RR</variation>
    <location>
        <begin position="1107"/>
        <end position="1108"/>
    </location>
</feature>
<feature type="mutagenesis site" description="In M4; decreased acetylation and activity of the mTORC2 complex." evidence="16 21">
    <original>KGGKLSSESK</original>
    <variation>RGGRLSSESR</variation>
    <location>
        <begin position="1116"/>
        <end position="1125"/>
    </location>
</feature>
<feature type="mutagenesis site" description="Impaired phosphorylation by RPS6KB1, leading to increased activity of the mTORC2 complex." evidence="10 11">
    <original>T</original>
    <variation>A</variation>
    <location>
        <position position="1135"/>
    </location>
</feature>
<feature type="mutagenesis site" description="Impaired phosphorylation by GSK3B in response to stress, leading to increased mTORC2 activity." evidence="13">
    <original>S</original>
    <variation>A</variation>
    <location>
        <position position="1235"/>
    </location>
</feature>
<feature type="mutagenesis site" description="Mimics phosphorylation; decreased activity of mTORC2." evidence="13">
    <original>S</original>
    <variation>D</variation>
    <location>
        <position position="1235"/>
    </location>
</feature>
<feature type="mutagenesis site" description="Reduced GSK3-mediated phosphorylation, reduced interaction with FBXW7, reduced FBXW7-mediated ubiquitination and increased stability." evidence="20">
    <original>T</original>
    <variation>G</variation>
    <location>
        <position position="1695"/>
    </location>
</feature>
<feature type="sequence conflict" description="In Ref. 2; CAH18135." evidence="40" ref="2">
    <original>E</original>
    <variation>G</variation>
    <location>
        <position position="545"/>
    </location>
</feature>
<feature type="sequence conflict" description="In Ref. 2; CAH18135." evidence="40" ref="2">
    <original>F</original>
    <variation>L</variation>
    <location>
        <position position="815"/>
    </location>
</feature>
<feature type="sequence conflict" description="In Ref. 2; CAH18135." evidence="40" ref="2">
    <original>N</original>
    <variation>S</variation>
    <location>
        <position position="1283"/>
    </location>
</feature>
<feature type="sequence conflict" description="In Ref. 5; AAH51729." evidence="40" ref="5">
    <original>Q</original>
    <variation>R</variation>
    <location>
        <position position="1699"/>
    </location>
</feature>
<feature type="helix" evidence="65">
    <location>
        <begin position="33"/>
        <end position="45"/>
    </location>
</feature>
<feature type="helix" evidence="65">
    <location>
        <begin position="46"/>
        <end position="48"/>
    </location>
</feature>
<feature type="helix" evidence="65">
    <location>
        <begin position="53"/>
        <end position="69"/>
    </location>
</feature>
<feature type="turn" evidence="65">
    <location>
        <begin position="74"/>
        <end position="76"/>
    </location>
</feature>
<feature type="strand" evidence="65">
    <location>
        <begin position="77"/>
        <end position="79"/>
    </location>
</feature>
<feature type="helix" evidence="65">
    <location>
        <begin position="81"/>
        <end position="88"/>
    </location>
</feature>
<feature type="turn" evidence="64">
    <location>
        <begin position="89"/>
        <end position="93"/>
    </location>
</feature>
<feature type="helix" evidence="65">
    <location>
        <begin position="97"/>
        <end position="108"/>
    </location>
</feature>
<feature type="helix" evidence="65">
    <location>
        <begin position="114"/>
        <end position="122"/>
    </location>
</feature>
<feature type="helix" evidence="65">
    <location>
        <begin position="125"/>
        <end position="133"/>
    </location>
</feature>
<feature type="helix" evidence="65">
    <location>
        <begin position="142"/>
        <end position="156"/>
    </location>
</feature>
<feature type="helix" evidence="65">
    <location>
        <begin position="158"/>
        <end position="160"/>
    </location>
</feature>
<feature type="helix" evidence="65">
    <location>
        <begin position="163"/>
        <end position="174"/>
    </location>
</feature>
<feature type="turn" evidence="65">
    <location>
        <begin position="177"/>
        <end position="180"/>
    </location>
</feature>
<feature type="helix" evidence="65">
    <location>
        <begin position="184"/>
        <end position="195"/>
    </location>
</feature>
<feature type="helix" evidence="65">
    <location>
        <begin position="199"/>
        <end position="204"/>
    </location>
</feature>
<feature type="helix" evidence="65">
    <location>
        <begin position="207"/>
        <end position="214"/>
    </location>
</feature>
<feature type="helix" evidence="65">
    <location>
        <begin position="221"/>
        <end position="234"/>
    </location>
</feature>
<feature type="helix" evidence="65">
    <location>
        <begin position="238"/>
        <end position="241"/>
    </location>
</feature>
<feature type="strand" evidence="65">
    <location>
        <begin position="246"/>
        <end position="249"/>
    </location>
</feature>
<feature type="helix" evidence="65">
    <location>
        <begin position="250"/>
        <end position="254"/>
    </location>
</feature>
<feature type="helix" evidence="65">
    <location>
        <begin position="255"/>
        <end position="258"/>
    </location>
</feature>
<feature type="helix" evidence="65">
    <location>
        <begin position="274"/>
        <end position="291"/>
    </location>
</feature>
<feature type="strand" evidence="66">
    <location>
        <begin position="292"/>
        <end position="294"/>
    </location>
</feature>
<feature type="helix" evidence="65">
    <location>
        <begin position="295"/>
        <end position="301"/>
    </location>
</feature>
<feature type="turn" evidence="65">
    <location>
        <begin position="304"/>
        <end position="306"/>
    </location>
</feature>
<feature type="helix" evidence="65">
    <location>
        <begin position="310"/>
        <end position="314"/>
    </location>
</feature>
<feature type="helix" evidence="65">
    <location>
        <begin position="315"/>
        <end position="317"/>
    </location>
</feature>
<feature type="turn" evidence="65">
    <location>
        <begin position="321"/>
        <end position="323"/>
    </location>
</feature>
<feature type="helix" evidence="65">
    <location>
        <begin position="324"/>
        <end position="334"/>
    </location>
</feature>
<feature type="helix" evidence="65">
    <location>
        <begin position="346"/>
        <end position="352"/>
    </location>
</feature>
<feature type="helix" evidence="65">
    <location>
        <begin position="360"/>
        <end position="362"/>
    </location>
</feature>
<feature type="helix" evidence="65">
    <location>
        <begin position="364"/>
        <end position="367"/>
    </location>
</feature>
<feature type="helix" evidence="65">
    <location>
        <begin position="370"/>
        <end position="376"/>
    </location>
</feature>
<feature type="strand" evidence="67">
    <location>
        <begin position="382"/>
        <end position="384"/>
    </location>
</feature>
<feature type="helix" evidence="65">
    <location>
        <begin position="387"/>
        <end position="401"/>
    </location>
</feature>
<feature type="helix" evidence="65">
    <location>
        <begin position="404"/>
        <end position="413"/>
    </location>
</feature>
<feature type="helix" evidence="65">
    <location>
        <begin position="417"/>
        <end position="437"/>
    </location>
</feature>
<feature type="helix" evidence="65">
    <location>
        <begin position="440"/>
        <end position="443"/>
    </location>
</feature>
<feature type="strand" evidence="65">
    <location>
        <begin position="444"/>
        <end position="446"/>
    </location>
</feature>
<feature type="helix" evidence="65">
    <location>
        <begin position="450"/>
        <end position="456"/>
    </location>
</feature>
<feature type="strand" evidence="65">
    <location>
        <begin position="459"/>
        <end position="461"/>
    </location>
</feature>
<feature type="helix" evidence="65">
    <location>
        <begin position="463"/>
        <end position="485"/>
    </location>
</feature>
<feature type="helix" evidence="65">
    <location>
        <begin position="493"/>
        <end position="508"/>
    </location>
</feature>
<feature type="helix" evidence="65">
    <location>
        <begin position="526"/>
        <end position="534"/>
    </location>
</feature>
<feature type="turn" evidence="65">
    <location>
        <begin position="537"/>
        <end position="539"/>
    </location>
</feature>
<feature type="strand" evidence="67">
    <location>
        <begin position="542"/>
        <end position="546"/>
    </location>
</feature>
<feature type="helix" evidence="65">
    <location>
        <begin position="548"/>
        <end position="556"/>
    </location>
</feature>
<feature type="strand" evidence="65">
    <location>
        <begin position="561"/>
        <end position="564"/>
    </location>
</feature>
<feature type="helix" evidence="65">
    <location>
        <begin position="568"/>
        <end position="581"/>
    </location>
</feature>
<feature type="turn" evidence="65">
    <location>
        <begin position="583"/>
        <end position="586"/>
    </location>
</feature>
<feature type="helix" evidence="64">
    <location>
        <begin position="588"/>
        <end position="590"/>
    </location>
</feature>
<feature type="strand" evidence="64">
    <location>
        <begin position="591"/>
        <end position="594"/>
    </location>
</feature>
<feature type="helix" evidence="65">
    <location>
        <begin position="599"/>
        <end position="614"/>
    </location>
</feature>
<feature type="turn" evidence="65">
    <location>
        <begin position="616"/>
        <end position="618"/>
    </location>
</feature>
<feature type="helix" evidence="65">
    <location>
        <begin position="620"/>
        <end position="638"/>
    </location>
</feature>
<feature type="strand" evidence="65">
    <location>
        <begin position="641"/>
        <end position="643"/>
    </location>
</feature>
<feature type="helix" evidence="65">
    <location>
        <begin position="648"/>
        <end position="651"/>
    </location>
</feature>
<feature type="helix" evidence="65">
    <location>
        <begin position="655"/>
        <end position="658"/>
    </location>
</feature>
<feature type="helix" evidence="65">
    <location>
        <begin position="659"/>
        <end position="667"/>
    </location>
</feature>
<feature type="helix" evidence="65">
    <location>
        <begin position="670"/>
        <end position="678"/>
    </location>
</feature>
<feature type="strand" evidence="68">
    <location>
        <begin position="679"/>
        <end position="681"/>
    </location>
</feature>
<feature type="helix" evidence="65">
    <location>
        <begin position="682"/>
        <end position="688"/>
    </location>
</feature>
<feature type="helix" evidence="65">
    <location>
        <begin position="696"/>
        <end position="702"/>
    </location>
</feature>
<feature type="strand" evidence="65">
    <location>
        <begin position="708"/>
        <end position="711"/>
    </location>
</feature>
<feature type="helix" evidence="65">
    <location>
        <begin position="712"/>
        <end position="722"/>
    </location>
</feature>
<feature type="helix" evidence="65">
    <location>
        <begin position="726"/>
        <end position="734"/>
    </location>
</feature>
<feature type="helix" evidence="65">
    <location>
        <begin position="737"/>
        <end position="740"/>
    </location>
</feature>
<feature type="turn" evidence="65">
    <location>
        <begin position="741"/>
        <end position="743"/>
    </location>
</feature>
<feature type="helix" evidence="65">
    <location>
        <begin position="747"/>
        <end position="758"/>
    </location>
</feature>
<feature type="helix" evidence="65">
    <location>
        <begin position="764"/>
        <end position="777"/>
    </location>
</feature>
<feature type="helix" evidence="65">
    <location>
        <begin position="781"/>
        <end position="788"/>
    </location>
</feature>
<feature type="strand" evidence="65">
    <location>
        <begin position="795"/>
        <end position="797"/>
    </location>
</feature>
<feature type="helix" evidence="65">
    <location>
        <begin position="799"/>
        <end position="805"/>
    </location>
</feature>
<feature type="helix" evidence="65">
    <location>
        <begin position="806"/>
        <end position="810"/>
    </location>
</feature>
<feature type="helix" evidence="65">
    <location>
        <begin position="812"/>
        <end position="820"/>
    </location>
</feature>
<feature type="helix" evidence="65">
    <location>
        <begin position="824"/>
        <end position="833"/>
    </location>
</feature>
<feature type="helix" evidence="65">
    <location>
        <begin position="836"/>
        <end position="851"/>
    </location>
</feature>
<feature type="helix" evidence="65">
    <location>
        <begin position="882"/>
        <end position="886"/>
    </location>
</feature>
<feature type="turn" evidence="65">
    <location>
        <begin position="887"/>
        <end position="889"/>
    </location>
</feature>
<feature type="helix" evidence="65">
    <location>
        <begin position="891"/>
        <end position="897"/>
    </location>
</feature>
<feature type="turn" evidence="65">
    <location>
        <begin position="898"/>
        <end position="900"/>
    </location>
</feature>
<feature type="helix" evidence="65">
    <location>
        <begin position="902"/>
        <end position="910"/>
    </location>
</feature>
<feature type="strand" evidence="65">
    <location>
        <begin position="915"/>
        <end position="917"/>
    </location>
</feature>
<feature type="helix" evidence="65">
    <location>
        <begin position="918"/>
        <end position="933"/>
    </location>
</feature>
<feature type="helix" evidence="65">
    <location>
        <begin position="937"/>
        <end position="944"/>
    </location>
</feature>
<feature type="turn" evidence="65">
    <location>
        <begin position="945"/>
        <end position="947"/>
    </location>
</feature>
<feature type="helix" evidence="65">
    <location>
        <begin position="949"/>
        <end position="958"/>
    </location>
</feature>
<feature type="helix" evidence="65">
    <location>
        <begin position="962"/>
        <end position="975"/>
    </location>
</feature>
<feature type="helix" evidence="65">
    <location>
        <begin position="979"/>
        <end position="987"/>
    </location>
</feature>
<feature type="strand" evidence="65">
    <location>
        <begin position="990"/>
        <end position="992"/>
    </location>
</feature>
<feature type="strand" evidence="68">
    <location>
        <begin position="997"/>
        <end position="1001"/>
    </location>
</feature>
<feature type="strand" evidence="65">
    <location>
        <begin position="1428"/>
        <end position="1432"/>
    </location>
</feature>
<feature type="helix" evidence="65">
    <location>
        <begin position="1433"/>
        <end position="1435"/>
    </location>
</feature>
<feature type="turn" evidence="65">
    <location>
        <begin position="1445"/>
        <end position="1447"/>
    </location>
</feature>
<feature type="helix" evidence="65">
    <location>
        <begin position="1480"/>
        <end position="1486"/>
    </location>
</feature>
<feature type="helix" evidence="65">
    <location>
        <begin position="1489"/>
        <end position="1492"/>
    </location>
</feature>
<feature type="strand" evidence="68">
    <location>
        <begin position="1517"/>
        <end position="1519"/>
    </location>
</feature>
<feature type="helix" evidence="65">
    <location>
        <begin position="1523"/>
        <end position="1528"/>
    </location>
</feature>
<feature type="helix" evidence="65">
    <location>
        <begin position="1610"/>
        <end position="1622"/>
    </location>
</feature>
<feature type="helix" evidence="65">
    <location>
        <begin position="1629"/>
        <end position="1642"/>
    </location>
</feature>
<feature type="turn" evidence="65">
    <location>
        <begin position="1644"/>
        <end position="1647"/>
    </location>
</feature>
<feature type="helix" evidence="65">
    <location>
        <begin position="1650"/>
        <end position="1660"/>
    </location>
</feature>
<feature type="helix" evidence="65">
    <location>
        <begin position="1667"/>
        <end position="1676"/>
    </location>
</feature>
<feature type="helix" evidence="65">
    <location>
        <begin position="1683"/>
        <end position="1693"/>
    </location>
</feature>
<proteinExistence type="evidence at protein level"/>
<organism>
    <name type="scientific">Homo sapiens</name>
    <name type="common">Human</name>
    <dbReference type="NCBI Taxonomy" id="9606"/>
    <lineage>
        <taxon>Eukaryota</taxon>
        <taxon>Metazoa</taxon>
        <taxon>Chordata</taxon>
        <taxon>Craniata</taxon>
        <taxon>Vertebrata</taxon>
        <taxon>Euteleostomi</taxon>
        <taxon>Mammalia</taxon>
        <taxon>Eutheria</taxon>
        <taxon>Euarchontoglires</taxon>
        <taxon>Primates</taxon>
        <taxon>Haplorrhini</taxon>
        <taxon>Catarrhini</taxon>
        <taxon>Hominidae</taxon>
        <taxon>Homo</taxon>
    </lineage>
</organism>
<sequence>MAAIGRGRSLKNLRVRGRNDSGEENVPLDLTREPSDNLREILQNVARLQGVSNMRKLGHLNNFTKLLCDIGHSEEKLGFHYEDIIICLRLALLNEAKEVRAAGLRALRYLIQDSSILQKVLKLKVDYLIARCIDIQQSNEVERTQALRLVRKMITVNASLFPSSVTNSLIAVGNDGLQERDRMVRACIAIICELALQNPEVVALRGGLNTILKNVIDCQLSRINEALITTILHLLNHPKTRQYVRADVELERILAPYTDFHYRHSPDTAEGQLKEDREARFLASKMGIIATFRSWAGIINLCKPGNSGIQSLIGVLCIPNMEIRRGLLEVLYDIFRLPLPVVTEEFIEALLSVDPGRFQDSWRLSDGFVAAEAKTILPHRARSRPDLMDNYLALILSAFIRNGLLEGLVEVITNSDDHISVRATILLGELLHMANTILPHSHSHHLHCLPTLMNMAASFDIPKEKRLRASAALNCLKRFHEMKKRGPKPYSLHLDHIIQKAIATHQKRDQYLRVQKDIFILKDTEEALLINLRDSQVLQHKENLEWNWNLIGTILKWPNVNLRNYKDEQLHRFVRRLLYFYKPSSKLYANLDLDFAKAKQLTVVGCQFTEFLLESEEDGQGYLEDLVKDIVQWLNASSGMKPERSLQNNGLLTTLSQHYFLFIGTLSCHPHGVKMLEKCSVFQCLLNLCSLKNQDHLLKLTVSSLDYSRDGLARVILSKILTAATDACRLYATKHLRVLLRANVEFFNNWGIELLVTQLHDKNKTISSEALDILDEACEDKANLHALIQMKPALSHLGDKGLLLLLRFLSIPKGFSYLNERGYVAKQLEKWHREYNSKYVDLIEEQLNEALTTYRKPVDGDNYVRRSNQRLQRPHVYLPIHLYGQLVHHKTGCHLLEVQNIITELCRNVRTPDLDKWEEIKKLKASLWALGNIGSSNWGLNLLQEENVIPDILKLAKQCEVLSIRGTCVYVLGLIAKTKQGCDILKCHNWDAVRHSRKHLWPVVPDDVEQLCNELSSIPSTLSLNSESTSSRHNSESESVPSSMFILEDDRFGSSSTSTFFLDINEDTEPTFYDRSGPIKDKNSFPFFASSKLVKNRILNSLTLPNKKHRSSSDPKGGKLSSESKTSNRRIRTLTEPSVDFNHSDDFTPISTVQKTLQLETSFMGNKHIEDTGSTPSIGENDLKFTKNFGTENHRENTSRERLVVESSTSSHMKIRSQSFNTDTTTSGISSMSSSPSRETVGVDATTMDTDCGSMSTVVSTKTIKTSHYLTPQSNHLSLSKSNSVSLVPPGSSHTLPRRAQSLKAPSIATIKSLADCNFSYTSSRDAFGYATLKRLQQQRMHPSLSHSEALASPAKDVLFTDTITMKANSFESRLTPSRFMKALSYASLDKEDLLSPINQNTLQRSSSVRSMVSSATYGGSDDYIGLALPVDINDIFQVKDIPYFQTKNIPPHDDRGARAFAHDAGGLPSGTGGLVKNSFHLLRQQMSLTEIMNSIHSDASLFLESTEDTGLQEHTDDNCLYCVCIEILGFQPSNQLSAICSHSDFQDIPYSDWCEQTIHNPLEVVPSKFSGISGCSDGVSQEGSASSTKSTELLLGVKTIPDDTPMCRILLRKEVLRLVINLSSSVSTKCHETGLLTIKEKYPQTFDDICLYSEVSHLLSHCTFRLPCRRFIQELFQDVQFLQMHEEAEAVLATPPKQPIVDTSAES</sequence>
<protein>
    <recommendedName>
        <fullName evidence="40">Rapamycin-insensitive companion of mTOR</fullName>
    </recommendedName>
    <alternativeName>
        <fullName evidence="37">AVO3 homolog</fullName>
        <shortName>hAVO3</shortName>
    </alternativeName>
</protein>
<comment type="function">
    <text evidence="1 3 4 6 10 11 12 13 29 32 33">Component of the mechanistic target of rapamycin complex 2 (mTORC2), which transduces signals from growth factors to pathways involved in proliferation, cytoskeletal organization, lipogenesis and anabolic output (PubMed:15268862, PubMed:15718470, PubMed:19720745, PubMed:19995915, PubMed:21343617, PubMed:33158864, PubMed:35904232, PubMed:35926713). In response to growth factors, mTORC2 phosphorylates and activates AGC protein kinase family members, including AKT (AKT1, AKT2 and AKT3), PKC (PRKCA, PRKCB and PRKCE) and SGK1 (PubMed:19720745, PubMed:19935711, PubMed:19995915). In contrast to mTORC1, mTORC2 is nutrient-insensitive (PubMed:15467718, PubMed:21343617). Within the mTORC2 complex, RICTOR probably acts as a molecular adapter (PubMed:21343617, PubMed:33158864, PubMed:35926713). RICTOR is responsible for the FKBP12-rapamycin-insensitivity of mTORC2 (PubMed:33158864). mTORC2 plays a critical role in AKT1 activation by mediating phosphorylation of different sites depending on the context, such as 'Thr-450', 'Ser-473', 'Ser-477' or 'Thr-479', facilitating the phosphorylation of the activation loop of AKT1 on 'Thr-308' by PDPK1/PDK1 which is a prerequisite for full activation (PubMed:15718470, PubMed:19720745, PubMed:19935711, PubMed:35926713). mTORC2 catalyzes the phosphorylation of SGK1 at 'Ser-422' and of PRKCA on 'Ser-657' (By similarity). The mTORC2 complex also phosphorylates various proteins involved in insulin signaling, such as FBXW8 and IGF2BP1 (By similarity). mTORC2 acts upstream of Rho GTPases to regulate the actin cytoskeleton, probably by activating one or more Rho-type guanine nucleotide exchange factors (PubMed:15467718). mTORC2 promotes the serum-induced formation of stress-fibers or F-actin (PubMed:15467718).</text>
</comment>
<comment type="subunit">
    <text evidence="1 3 4 7 8 15 17 18 19 20 23 24 26 28 29 30 31 32 33 34">Component of the mechanistic target of rapamycin complex 2 (mTORC2), consisting in two heterotretramers composed of MTOR, MLST8, RICTOR and MAPKAP1/SIN1 (PubMed:15268862, PubMed:15467718, PubMed:17461779, PubMed:17599906, PubMed:29424687, PubMed:29567957, PubMed:33158864, PubMed:34519268, PubMed:35926713). The mTORC2 core complex associates with PRR5/PROTOR1 and/or PRR5L/PROTOR2 (PubMed:17461779, PubMed:21964062, PubMed:29424687). Contrary to mTORC1, mTORC2 does not bind to and is not sensitive to FKBP12-rapamycin (PubMed:15467718, PubMed:33158864). Binds directly to MTOR and PRR5 within the TORC2 complex; interaction with MTOR is enhanced by deubiquitination of RICTOR by USP9X (PubMed:15268862, PubMed:17461779, PubMed:17599906, PubMed:33378666). Interaction with MAPKAP1 is not enhanced by RICTOR deubiquitination by USP9X (PubMed:33378666). Interacts with CCDC28B (PubMed:23727834). Interacts with NBN (PubMed:23762398). Interacts with SIK3 (PubMed:30232230). Interacts with NCKAP1L (PubMed:32647003). Interacts with kinases GSK3A and GSK3B; the interactions lead to phosphorylation of RICTOR at Thr-1695 which facilitates its FBXW7-mediated ubiquitination and subsequent degradation (PubMed:25897075). Interacts with FBXW7; the interaction is enhanced by GSK3-mediated phosphorylation of Thr-1695 and results in RICTOR ubiquitination and degradation (PubMed:25897075). Interacts with ARMH4 (via cytoplasmic tail); this interaction bridges ARMH4 to the mTORC2 complex and inhibits the mTORC2 kinase activity (By similarity). Interacts with UBXN2A (PubMed:37037900). Interacts with TSPAN8 (PubMed:25761241, PubMed:35904232).</text>
</comment>
<comment type="subunit">
    <text evidence="25">(Microbial infection) Interacts with vaccinia virus protein F17; this interaction dysregulates MTOR.</text>
</comment>
<comment type="interaction">
    <interactant intactId="EBI-1387196">
        <id>Q6R327</id>
    </interactant>
    <interactant intactId="EBI-747644">
        <id>Q13418</id>
        <label>ILK</label>
    </interactant>
    <organismsDiffer>false</organismsDiffer>
    <experiments>8</experiments>
</comment>
<comment type="interaction">
    <interactant intactId="EBI-1387196">
        <id>Q6R327</id>
    </interactant>
    <interactant intactId="EBI-359260">
        <id>P42345</id>
        <label>MTOR</label>
    </interactant>
    <organismsDiffer>false</organismsDiffer>
    <experiments>37</experiments>
</comment>
<comment type="interaction">
    <interactant intactId="EBI-1387196">
        <id>Q6R327</id>
    </interactant>
    <interactant intactId="EBI-1046542">
        <id>Q8TCU6</id>
        <label>PREX1</label>
    </interactant>
    <organismsDiffer>false</organismsDiffer>
    <experiments>3</experiments>
</comment>
<comment type="interaction">
    <interactant intactId="EBI-1387196">
        <id>Q6R327</id>
    </interactant>
    <interactant intactId="EBI-476295">
        <id>P31947</id>
        <label>SFN</label>
    </interactant>
    <organismsDiffer>false</organismsDiffer>
    <experiments>4</experiments>
</comment>
<comment type="interaction">
    <interactant intactId="EBI-1387196">
        <id>Q6R327</id>
    </interactant>
    <interactant intactId="EBI-356498">
        <id>P62258</id>
        <label>YWHAE</label>
    </interactant>
    <organismsDiffer>false</organismsDiffer>
    <experiments>5</experiments>
</comment>
<comment type="interaction">
    <interactant intactId="EBI-1387196">
        <id>Q6R327</id>
    </interactant>
    <interactant intactId="EBI-347088">
        <id>P63104</id>
        <label>YWHAZ</label>
    </interactant>
    <organismsDiffer>false</organismsDiffer>
    <experiments>5</experiments>
</comment>
<comment type="subcellular location">
    <subcellularLocation>
        <location evidence="14">Cell membrane</location>
    </subcellularLocation>
    <subcellularLocation>
        <location evidence="14">Endoplasmic reticulum membrane</location>
    </subcellularLocation>
    <subcellularLocation>
        <location evidence="27">Lysosome membrane</location>
    </subcellularLocation>
    <text evidence="14 27">The mTORC2 complex localizes to membranes: mTORC2 is active at the plasma membrane, endoplasmic reticulum membrane and lysosomes (PubMed:21867682). Iin lysosomal membrane, mTORC2 is sensitive to lysosomal positioning in the cell (PubMed:31130364).</text>
</comment>
<comment type="alternative products">
    <event type="alternative splicing"/>
    <isoform>
        <id>Q6R327-1</id>
        <name evidence="3">1</name>
        <sequence type="displayed"/>
    </isoform>
    <isoform>
        <id>Q6R327-4</id>
        <name>2</name>
        <sequence type="described" ref="VSP_038362 VSP_038363"/>
    </isoform>
    <isoform>
        <id>Q6R327-3</id>
        <name>3</name>
        <sequence type="described" ref="VSP_052581"/>
    </isoform>
</comment>
<comment type="PTM">
    <text evidence="4 10 11 12 13 20">Phosphorylated by MTOR; when part of mTORC2 (PubMed:15467718). Phosphorylated at Thr-1135 by RPS6KB1 downstream of the mTORC1 complex: phosphorylation of RICTOR inhibits mTORC2 signaling by creating a binding site for 14-3-3 proteins (PubMed:19720745, PubMed:19935711, PubMed:19995915). Phosphorylated at Thr-1695 by GSK3A and GSK3B which facilitates RICTOR ubiquitination and subsequent degradation (PubMed:25897075). Phosphorylated at Ser-1235 by GSK3B in response to endoplasmic stress, inhibiting mTORC2 signaling (PubMed:21343617).</text>
</comment>
<comment type="PTM">
    <text evidence="20 30">Ubiquitinated by the SCF(FBXW7) complex, leading to its degradation by the proteasome (PubMed:25897075). Deubiquitinated by USP9X; deubiquitination stabilizes RICTOR and enhances its binding to MTOR, thus promoting mTORC2 complex assembly (PubMed:33378666).</text>
</comment>
<comment type="PTM">
    <text evidence="16 21 35">Acetylated by EP300/p300 in response to glucose, leading to activate the mTORC2 complex (PubMed:22084251, PubMed:26170313). Acetylation by BLOC1S1/GCN5L1 in response to hypotoxic stress protects RICTOR against ubiquitination and subsequent degradation by the proteasome (PubMed:38281616).</text>
</comment>
<comment type="miscellaneous">
    <molecule>Isoform 2</molecule>
    <text evidence="40">May be produced at very low levels due to a premature stop codon in the mRNA, leading to nonsense-mediated mRNA decay.</text>
</comment>
<comment type="similarity">
    <text evidence="40">Belongs to the RICTOR family.</text>
</comment>
<comment type="sequence caution" evidence="40">
    <conflict type="miscellaneous discrepancy">
        <sequence resource="EMBL-CDS" id="CAH18135"/>
    </conflict>
    <text>Wrong choice of CDS.</text>
</comment>